<gene>
    <name type="primary">ERBB3</name>
    <name type="synonym">HER3</name>
</gene>
<name>ERBB3_HUMAN</name>
<reference key="1">
    <citation type="journal article" date="1989" name="Proc. Natl. Acad. Sci. U.S.A.">
        <title>Isolation and characterization of ERBB3, a third member of the ERBB/epidermal growth factor receptor family: evidence for overexpression in a subset of human mammary tumors.</title>
        <authorList>
            <person name="Kraus M.H."/>
            <person name="Issing W."/>
            <person name="Miki T."/>
            <person name="Popescu N.C."/>
            <person name="Aaronson S.A."/>
        </authorList>
    </citation>
    <scope>NUCLEOTIDE SEQUENCE [MRNA] (ISOFORM 1)</scope>
</reference>
<reference key="2">
    <citation type="journal article" date="1990" name="Proc. Natl. Acad. Sci. U.S.A.">
        <title>Molecular cloning and expression of an additional epidermal growth factor receptor-related gene.</title>
        <authorList>
            <person name="Plowman G.D."/>
            <person name="Whitney G.S."/>
            <person name="Neubauer M.G."/>
            <person name="Green J.M."/>
            <person name="McDonald V.L."/>
            <person name="Todaro G.J."/>
            <person name="Shoyab M."/>
        </authorList>
    </citation>
    <scope>NUCLEOTIDE SEQUENCE [MRNA] (ISOFORM 1)</scope>
</reference>
<reference key="3">
    <citation type="journal article" date="1993" name="Biochem. Biophys. Res. Commun.">
        <title>c-erbB3 gene encodes secreted as well as transmembrane receptor tyrosine kinase.</title>
        <authorList>
            <person name="Katoh M."/>
            <person name="Yazaki Y."/>
            <person name="Sugimura T."/>
            <person name="Terada M."/>
        </authorList>
    </citation>
    <scope>NUCLEOTIDE SEQUENCE [MRNA] (ISOFORM 2)</scope>
    <source>
        <tissue>Placenta</tissue>
    </source>
</reference>
<reference key="4">
    <citation type="submission" date="2003-05" db="EMBL/GenBank/DDBJ databases">
        <title>Cloning of human full-length CDSs in BD Creator(TM) system donor vector.</title>
        <authorList>
            <person name="Kalnine N."/>
            <person name="Chen X."/>
            <person name="Rolfs A."/>
            <person name="Halleck A."/>
            <person name="Hines L."/>
            <person name="Eisenstein S."/>
            <person name="Koundinya M."/>
            <person name="Raphael J."/>
            <person name="Moreira D."/>
            <person name="Kelley T."/>
            <person name="LaBaer J."/>
            <person name="Lin Y."/>
            <person name="Phelan M."/>
            <person name="Farmer A."/>
        </authorList>
    </citation>
    <scope>NUCLEOTIDE SEQUENCE [LARGE SCALE MRNA] (ISOFORM 3)</scope>
</reference>
<reference key="5">
    <citation type="journal article" date="2004" name="Nat. Genet.">
        <title>Complete sequencing and characterization of 21,243 full-length human cDNAs.</title>
        <authorList>
            <person name="Ota T."/>
            <person name="Suzuki Y."/>
            <person name="Nishikawa T."/>
            <person name="Otsuki T."/>
            <person name="Sugiyama T."/>
            <person name="Irie R."/>
            <person name="Wakamatsu A."/>
            <person name="Hayashi K."/>
            <person name="Sato H."/>
            <person name="Nagai K."/>
            <person name="Kimura K."/>
            <person name="Makita H."/>
            <person name="Sekine M."/>
            <person name="Obayashi M."/>
            <person name="Nishi T."/>
            <person name="Shibahara T."/>
            <person name="Tanaka T."/>
            <person name="Ishii S."/>
            <person name="Yamamoto J."/>
            <person name="Saito K."/>
            <person name="Kawai Y."/>
            <person name="Isono Y."/>
            <person name="Nakamura Y."/>
            <person name="Nagahari K."/>
            <person name="Murakami K."/>
            <person name="Yasuda T."/>
            <person name="Iwayanagi T."/>
            <person name="Wagatsuma M."/>
            <person name="Shiratori A."/>
            <person name="Sudo H."/>
            <person name="Hosoiri T."/>
            <person name="Kaku Y."/>
            <person name="Kodaira H."/>
            <person name="Kondo H."/>
            <person name="Sugawara M."/>
            <person name="Takahashi M."/>
            <person name="Kanda K."/>
            <person name="Yokoi T."/>
            <person name="Furuya T."/>
            <person name="Kikkawa E."/>
            <person name="Omura Y."/>
            <person name="Abe K."/>
            <person name="Kamihara K."/>
            <person name="Katsuta N."/>
            <person name="Sato K."/>
            <person name="Tanikawa M."/>
            <person name="Yamazaki M."/>
            <person name="Ninomiya K."/>
            <person name="Ishibashi T."/>
            <person name="Yamashita H."/>
            <person name="Murakawa K."/>
            <person name="Fujimori K."/>
            <person name="Tanai H."/>
            <person name="Kimata M."/>
            <person name="Watanabe M."/>
            <person name="Hiraoka S."/>
            <person name="Chiba Y."/>
            <person name="Ishida S."/>
            <person name="Ono Y."/>
            <person name="Takiguchi S."/>
            <person name="Watanabe S."/>
            <person name="Yosida M."/>
            <person name="Hotuta T."/>
            <person name="Kusano J."/>
            <person name="Kanehori K."/>
            <person name="Takahashi-Fujii A."/>
            <person name="Hara H."/>
            <person name="Tanase T.-O."/>
            <person name="Nomura Y."/>
            <person name="Togiya S."/>
            <person name="Komai F."/>
            <person name="Hara R."/>
            <person name="Takeuchi K."/>
            <person name="Arita M."/>
            <person name="Imose N."/>
            <person name="Musashino K."/>
            <person name="Yuuki H."/>
            <person name="Oshima A."/>
            <person name="Sasaki N."/>
            <person name="Aotsuka S."/>
            <person name="Yoshikawa Y."/>
            <person name="Matsunawa H."/>
            <person name="Ichihara T."/>
            <person name="Shiohata N."/>
            <person name="Sano S."/>
            <person name="Moriya S."/>
            <person name="Momiyama H."/>
            <person name="Satoh N."/>
            <person name="Takami S."/>
            <person name="Terashima Y."/>
            <person name="Suzuki O."/>
            <person name="Nakagawa S."/>
            <person name="Senoh A."/>
            <person name="Mizoguchi H."/>
            <person name="Goto Y."/>
            <person name="Shimizu F."/>
            <person name="Wakebe H."/>
            <person name="Hishigaki H."/>
            <person name="Watanabe T."/>
            <person name="Sugiyama A."/>
            <person name="Takemoto M."/>
            <person name="Kawakami B."/>
            <person name="Yamazaki M."/>
            <person name="Watanabe K."/>
            <person name="Kumagai A."/>
            <person name="Itakura S."/>
            <person name="Fukuzumi Y."/>
            <person name="Fujimori Y."/>
            <person name="Komiyama M."/>
            <person name="Tashiro H."/>
            <person name="Tanigami A."/>
            <person name="Fujiwara T."/>
            <person name="Ono T."/>
            <person name="Yamada K."/>
            <person name="Fujii Y."/>
            <person name="Ozaki K."/>
            <person name="Hirao M."/>
            <person name="Ohmori Y."/>
            <person name="Kawabata A."/>
            <person name="Hikiji T."/>
            <person name="Kobatake N."/>
            <person name="Inagaki H."/>
            <person name="Ikema Y."/>
            <person name="Okamoto S."/>
            <person name="Okitani R."/>
            <person name="Kawakami T."/>
            <person name="Noguchi S."/>
            <person name="Itoh T."/>
            <person name="Shigeta K."/>
            <person name="Senba T."/>
            <person name="Matsumura K."/>
            <person name="Nakajima Y."/>
            <person name="Mizuno T."/>
            <person name="Morinaga M."/>
            <person name="Sasaki M."/>
            <person name="Togashi T."/>
            <person name="Oyama M."/>
            <person name="Hata H."/>
            <person name="Watanabe M."/>
            <person name="Komatsu T."/>
            <person name="Mizushima-Sugano J."/>
            <person name="Satoh T."/>
            <person name="Shirai Y."/>
            <person name="Takahashi Y."/>
            <person name="Nakagawa K."/>
            <person name="Okumura K."/>
            <person name="Nagase T."/>
            <person name="Nomura N."/>
            <person name="Kikuchi H."/>
            <person name="Masuho Y."/>
            <person name="Yamashita R."/>
            <person name="Nakai K."/>
            <person name="Yada T."/>
            <person name="Nakamura Y."/>
            <person name="Ohara O."/>
            <person name="Isogai T."/>
            <person name="Sugano S."/>
        </authorList>
    </citation>
    <scope>NUCLEOTIDE SEQUENCE [LARGE SCALE MRNA] (ISOFORMS 1; 4 AND 5)</scope>
    <source>
        <tissue>Hippocampus</tissue>
        <tissue>Placenta</tissue>
        <tissue>Small intestine</tissue>
    </source>
</reference>
<reference key="6">
    <citation type="journal article" date="2006" name="Nature">
        <title>The finished DNA sequence of human chromosome 12.</title>
        <authorList>
            <person name="Scherer S.E."/>
            <person name="Muzny D.M."/>
            <person name="Buhay C.J."/>
            <person name="Chen R."/>
            <person name="Cree A."/>
            <person name="Ding Y."/>
            <person name="Dugan-Rocha S."/>
            <person name="Gill R."/>
            <person name="Gunaratne P."/>
            <person name="Harris R.A."/>
            <person name="Hawes A.C."/>
            <person name="Hernandez J."/>
            <person name="Hodgson A.V."/>
            <person name="Hume J."/>
            <person name="Jackson A."/>
            <person name="Khan Z.M."/>
            <person name="Kovar-Smith C."/>
            <person name="Lewis L.R."/>
            <person name="Lozado R.J."/>
            <person name="Metzker M.L."/>
            <person name="Milosavljevic A."/>
            <person name="Miner G.R."/>
            <person name="Montgomery K.T."/>
            <person name="Morgan M.B."/>
            <person name="Nazareth L.V."/>
            <person name="Scott G."/>
            <person name="Sodergren E."/>
            <person name="Song X.-Z."/>
            <person name="Steffen D."/>
            <person name="Lovering R.C."/>
            <person name="Wheeler D.A."/>
            <person name="Worley K.C."/>
            <person name="Yuan Y."/>
            <person name="Zhang Z."/>
            <person name="Adams C.Q."/>
            <person name="Ansari-Lari M.A."/>
            <person name="Ayele M."/>
            <person name="Brown M.J."/>
            <person name="Chen G."/>
            <person name="Chen Z."/>
            <person name="Clerc-Blankenburg K.P."/>
            <person name="Davis C."/>
            <person name="Delgado O."/>
            <person name="Dinh H.H."/>
            <person name="Draper H."/>
            <person name="Gonzalez-Garay M.L."/>
            <person name="Havlak P."/>
            <person name="Jackson L.R."/>
            <person name="Jacob L.S."/>
            <person name="Kelly S.H."/>
            <person name="Li L."/>
            <person name="Li Z."/>
            <person name="Liu J."/>
            <person name="Liu W."/>
            <person name="Lu J."/>
            <person name="Maheshwari M."/>
            <person name="Nguyen B.-V."/>
            <person name="Okwuonu G.O."/>
            <person name="Pasternak S."/>
            <person name="Perez L.M."/>
            <person name="Plopper F.J.H."/>
            <person name="Santibanez J."/>
            <person name="Shen H."/>
            <person name="Tabor P.E."/>
            <person name="Verduzco D."/>
            <person name="Waldron L."/>
            <person name="Wang Q."/>
            <person name="Williams G.A."/>
            <person name="Zhang J."/>
            <person name="Zhou J."/>
            <person name="Allen C.C."/>
            <person name="Amin A.G."/>
            <person name="Anyalebechi V."/>
            <person name="Bailey M."/>
            <person name="Barbaria J.A."/>
            <person name="Bimage K.E."/>
            <person name="Bryant N.P."/>
            <person name="Burch P.E."/>
            <person name="Burkett C.E."/>
            <person name="Burrell K.L."/>
            <person name="Calderon E."/>
            <person name="Cardenas V."/>
            <person name="Carter K."/>
            <person name="Casias K."/>
            <person name="Cavazos I."/>
            <person name="Cavazos S.R."/>
            <person name="Ceasar H."/>
            <person name="Chacko J."/>
            <person name="Chan S.N."/>
            <person name="Chavez D."/>
            <person name="Christopoulos C."/>
            <person name="Chu J."/>
            <person name="Cockrell R."/>
            <person name="Cox C.D."/>
            <person name="Dang M."/>
            <person name="Dathorne S.R."/>
            <person name="David R."/>
            <person name="Davis C.M."/>
            <person name="Davy-Carroll L."/>
            <person name="Deshazo D.R."/>
            <person name="Donlin J.E."/>
            <person name="D'Souza L."/>
            <person name="Eaves K.A."/>
            <person name="Egan A."/>
            <person name="Emery-Cohen A.J."/>
            <person name="Escotto M."/>
            <person name="Flagg N."/>
            <person name="Forbes L.D."/>
            <person name="Gabisi A.M."/>
            <person name="Garza M."/>
            <person name="Hamilton C."/>
            <person name="Henderson N."/>
            <person name="Hernandez O."/>
            <person name="Hines S."/>
            <person name="Hogues M.E."/>
            <person name="Huang M."/>
            <person name="Idlebird D.G."/>
            <person name="Johnson R."/>
            <person name="Jolivet A."/>
            <person name="Jones S."/>
            <person name="Kagan R."/>
            <person name="King L.M."/>
            <person name="Leal B."/>
            <person name="Lebow H."/>
            <person name="Lee S."/>
            <person name="LeVan J.M."/>
            <person name="Lewis L.C."/>
            <person name="London P."/>
            <person name="Lorensuhewa L.M."/>
            <person name="Loulseged H."/>
            <person name="Lovett D.A."/>
            <person name="Lucier A."/>
            <person name="Lucier R.L."/>
            <person name="Ma J."/>
            <person name="Madu R.C."/>
            <person name="Mapua P."/>
            <person name="Martindale A.D."/>
            <person name="Martinez E."/>
            <person name="Massey E."/>
            <person name="Mawhiney S."/>
            <person name="Meador M.G."/>
            <person name="Mendez S."/>
            <person name="Mercado C."/>
            <person name="Mercado I.C."/>
            <person name="Merritt C.E."/>
            <person name="Miner Z.L."/>
            <person name="Minja E."/>
            <person name="Mitchell T."/>
            <person name="Mohabbat F."/>
            <person name="Mohabbat K."/>
            <person name="Montgomery B."/>
            <person name="Moore N."/>
            <person name="Morris S."/>
            <person name="Munidasa M."/>
            <person name="Ngo R.N."/>
            <person name="Nguyen N.B."/>
            <person name="Nickerson E."/>
            <person name="Nwaokelemeh O.O."/>
            <person name="Nwokenkwo S."/>
            <person name="Obregon M."/>
            <person name="Oguh M."/>
            <person name="Oragunye N."/>
            <person name="Oviedo R.J."/>
            <person name="Parish B.J."/>
            <person name="Parker D.N."/>
            <person name="Parrish J."/>
            <person name="Parks K.L."/>
            <person name="Paul H.A."/>
            <person name="Payton B.A."/>
            <person name="Perez A."/>
            <person name="Perrin W."/>
            <person name="Pickens A."/>
            <person name="Primus E.L."/>
            <person name="Pu L.-L."/>
            <person name="Puazo M."/>
            <person name="Quiles M.M."/>
            <person name="Quiroz J.B."/>
            <person name="Rabata D."/>
            <person name="Reeves K."/>
            <person name="Ruiz S.J."/>
            <person name="Shao H."/>
            <person name="Sisson I."/>
            <person name="Sonaike T."/>
            <person name="Sorelle R.P."/>
            <person name="Sutton A.E."/>
            <person name="Svatek A.F."/>
            <person name="Svetz L.A."/>
            <person name="Tamerisa K.S."/>
            <person name="Taylor T.R."/>
            <person name="Teague B."/>
            <person name="Thomas N."/>
            <person name="Thorn R.D."/>
            <person name="Trejos Z.Y."/>
            <person name="Trevino B.K."/>
            <person name="Ukegbu O.N."/>
            <person name="Urban J.B."/>
            <person name="Vasquez L.I."/>
            <person name="Vera V.A."/>
            <person name="Villasana D.M."/>
            <person name="Wang L."/>
            <person name="Ward-Moore S."/>
            <person name="Warren J.T."/>
            <person name="Wei X."/>
            <person name="White F."/>
            <person name="Williamson A.L."/>
            <person name="Wleczyk R."/>
            <person name="Wooden H.S."/>
            <person name="Wooden S.H."/>
            <person name="Yen J."/>
            <person name="Yoon L."/>
            <person name="Yoon V."/>
            <person name="Zorrilla S.E."/>
            <person name="Nelson D."/>
            <person name="Kucherlapati R."/>
            <person name="Weinstock G."/>
            <person name="Gibbs R.A."/>
        </authorList>
    </citation>
    <scope>NUCLEOTIDE SEQUENCE [LARGE SCALE GENOMIC DNA]</scope>
</reference>
<reference key="7">
    <citation type="journal article" date="2004" name="Genome Res.">
        <title>The status, quality, and expansion of the NIH full-length cDNA project: the Mammalian Gene Collection (MGC).</title>
        <authorList>
            <consortium name="The MGC Project Team"/>
        </authorList>
    </citation>
    <scope>NUCLEOTIDE SEQUENCE [LARGE SCALE MRNA] (ISOFORMS 1 AND 3)</scope>
    <source>
        <tissue>Skin</tissue>
    </source>
</reference>
<reference key="8">
    <citation type="journal article" date="1998" name="J. Biol. Chem.">
        <title>Analysis of Grb7 recruitment by heregulin-activated erbB receptors reveals a novel target selectivity for erbB3.</title>
        <authorList>
            <person name="Fiddes R.J."/>
            <person name="Campbell D.H."/>
            <person name="Janes P.W."/>
            <person name="Sivertsen S.P."/>
            <person name="Sasaki H."/>
            <person name="Wallasch C."/>
            <person name="Daly R.J."/>
        </authorList>
    </citation>
    <scope>INTERACTION WITH GRB7</scope>
</reference>
<reference key="9">
    <citation type="journal article" date="2001" name="Mol. Cell. Endocrinol.">
        <title>Regulation of the ErbB3 binding protein Ebp1 by protein kinase C.</title>
        <authorList>
            <person name="Lessor T.J."/>
            <person name="Hamburger A.W."/>
        </authorList>
    </citation>
    <scope>INTERACTION WITH PA2G4</scope>
</reference>
<reference key="10">
    <citation type="journal article" date="2003" name="Mol. Cancer Res.">
        <title>Heregulin targets gamma-catenin to the nucleolus by a mechanism dependent on the DF3/MUC1 oncoprotein.</title>
        <authorList>
            <person name="Li Y."/>
            <person name="Yu W.-H."/>
            <person name="Ren J."/>
            <person name="Chen W."/>
            <person name="Huang L."/>
            <person name="Kharbanda S."/>
            <person name="Loda M."/>
            <person name="Kufe D."/>
        </authorList>
    </citation>
    <scope>INTERACTION WITH MUC1</scope>
</reference>
<reference key="11">
    <citation type="journal article" date="2004" name="Biochem. Biophys. Res. Commun.">
        <title>Neuroglycan C, a novel member of the neuregulin family.</title>
        <authorList>
            <person name="Kinugasa Y."/>
            <person name="Ishiguro H."/>
            <person name="Tokita Y."/>
            <person name="Oohira A."/>
            <person name="Ohmoto H."/>
            <person name="Higashiyama S."/>
        </authorList>
    </citation>
    <scope>INTERACTION WITH CSPG5</scope>
    <scope>FUNCTION</scope>
</reference>
<reference key="12">
    <citation type="journal article" date="2006" name="Proc. Natl. Acad. Sci. U.S.A.">
        <title>Ebp1 isoforms distinctively regulate cell survival and differentiation.</title>
        <authorList>
            <person name="Liu Z."/>
            <person name="Ahn J.Y."/>
            <person name="Liu X."/>
            <person name="Ye K."/>
        </authorList>
    </citation>
    <scope>INTERACTION WITH PA2G4</scope>
</reference>
<reference key="13">
    <citation type="journal article" date="2007" name="Am. J. Hum. Genet.">
        <title>Lethal congenital contractural syndrome type 2 (LCCS2) is caused by a mutation in ERBB3 (Her3), a modulator of the phosphatidylinositol-3-kinase/Akt pathway.</title>
        <authorList>
            <person name="Narkis G."/>
            <person name="Ofir R."/>
            <person name="Manor E."/>
            <person name="Landau D."/>
            <person name="Elbedour K."/>
            <person name="Birk O.S."/>
        </authorList>
    </citation>
    <scope>INVOLVEMENT IN LCCS2</scope>
</reference>
<reference key="14">
    <citation type="journal article" date="2009" name="Mol. Cell. Proteomics">
        <title>Large-scale proteomics analysis of the human kinome.</title>
        <authorList>
            <person name="Oppermann F.S."/>
            <person name="Gnad F."/>
            <person name="Olsen J.V."/>
            <person name="Hornberger R."/>
            <person name="Greff Z."/>
            <person name="Keri G."/>
            <person name="Mann M."/>
            <person name="Daub H."/>
        </authorList>
    </citation>
    <scope>IDENTIFICATION BY MASS SPECTROMETRY [LARGE SCALE ANALYSIS]</scope>
</reference>
<reference key="15">
    <citation type="journal article" date="2010" name="J. Biol. Chem.">
        <title>Direct binding of the EGF-like domain of neuregulin-1 to integrins ({alpha}v{beta}3 and {alpha}6{beta}4) is involved in neuregulin-1/ErbB signaling.</title>
        <authorList>
            <person name="Ieguchi K."/>
            <person name="Fujita M."/>
            <person name="Ma Z."/>
            <person name="Davari P."/>
            <person name="Taniguchi Y."/>
            <person name="Sekiguchi K."/>
            <person name="Wang B."/>
            <person name="Takada Y.K."/>
            <person name="Takada Y."/>
        </authorList>
    </citation>
    <scope>FUNCTION</scope>
    <scope>BINDING TO NRG1</scope>
    <scope>IDENTIFICATION IN A COMPLEX WITH NRG1 AND INTEGRINS</scope>
    <scope>PHOSPHORYLATION</scope>
</reference>
<reference key="16">
    <citation type="journal article" date="2013" name="J. Proteome Res.">
        <title>Toward a comprehensive characterization of a human cancer cell phosphoproteome.</title>
        <authorList>
            <person name="Zhou H."/>
            <person name="Di Palma S."/>
            <person name="Preisinger C."/>
            <person name="Peng M."/>
            <person name="Polat A.N."/>
            <person name="Heck A.J."/>
            <person name="Mohammed S."/>
        </authorList>
    </citation>
    <scope>PHOSPHORYLATION [LARGE SCALE ANALYSIS] AT SER-686</scope>
    <scope>IDENTIFICATION BY MASS SPECTROMETRY [LARGE SCALE ANALYSIS]</scope>
    <source>
        <tissue>Cervix carcinoma</tissue>
        <tissue>Erythroleukemia</tissue>
    </source>
</reference>
<reference key="17">
    <citation type="journal article" date="2014" name="J. Proteomics">
        <title>An enzyme assisted RP-RPLC approach for in-depth analysis of human liver phosphoproteome.</title>
        <authorList>
            <person name="Bian Y."/>
            <person name="Song C."/>
            <person name="Cheng K."/>
            <person name="Dong M."/>
            <person name="Wang F."/>
            <person name="Huang J."/>
            <person name="Sun D."/>
            <person name="Wang L."/>
            <person name="Ye M."/>
            <person name="Zou H."/>
        </authorList>
    </citation>
    <scope>PHOSPHORYLATION [LARGE SCALE ANALYSIS] AT SER-686 AND SER-982</scope>
    <scope>IDENTIFICATION BY MASS SPECTROMETRY [LARGE SCALE ANALYSIS]</scope>
    <source>
        <tissue>Liver</tissue>
    </source>
</reference>
<reference key="18">
    <citation type="journal article" date="2002" name="Science">
        <title>Structure of the extracellular region of HER3 reveals an interdomain tether.</title>
        <authorList>
            <person name="Cho H.S."/>
            <person name="Leahy D.J."/>
        </authorList>
    </citation>
    <scope>X-RAY CRYSTALLOGRAPHY (2.6 ANGSTROMS) OF 20-640</scope>
    <scope>DISULFIDE BONDS</scope>
    <scope>GLYCOSYLATION AT ASN-250; ASN-353; ASN-408; ASN-414; ASN-437; ASN-469; ASN-522 AND ASN-566</scope>
</reference>
<reference key="19">
    <citation type="journal article" date="2009" name="Proc. Natl. Acad. Sci. U.S.A.">
        <title>Structural analysis of the catalytically inactive kinase domain of the human EGF receptor 3.</title>
        <authorList>
            <person name="Jura N."/>
            <person name="Shan Y."/>
            <person name="Cao X."/>
            <person name="Shaw D.E."/>
            <person name="Kuriyan J."/>
        </authorList>
    </citation>
    <scope>X-RAY CRYSTALLOGRAPHY (2.8 ANGSTROMS) OF 698-1019 IN COMPLEX WITH AMP-PNP</scope>
    <scope>SUBUNIT</scope>
</reference>
<reference key="20">
    <citation type="journal article" date="2010" name="Proc. Natl. Acad. Sci. U.S.A.">
        <title>ErbB3/HER3 intracellular domain is competent to bind ATP and catalyze autophosphorylation.</title>
        <authorList>
            <person name="Shi F."/>
            <person name="Telesco S.E."/>
            <person name="Liu Y."/>
            <person name="Radhakrishnan R."/>
            <person name="Lemmon M.A."/>
        </authorList>
    </citation>
    <scope>X-RAY CRYSTALLOGRAPHY (2.8 ANGSTROMS) OF 684-1020 IN COMPLEX WITH AMP-PNP</scope>
    <scope>CATALYTIC ACTIVITY</scope>
    <scope>MUTAGENESIS OF LYS-742 AND TYR-868</scope>
    <scope>AUTOPHOSPHORYLATION</scope>
    <scope>SUBUNIT</scope>
</reference>
<reference key="21">
    <citation type="journal article" date="2011" name="Biochim. Biophys. Acta">
        <title>Spatial structure and dimer-monomer equilibrium of the ErbB3 transmembrane domain in DPC micelles.</title>
        <authorList>
            <person name="Mineev K.S."/>
            <person name="Khabibullina N.F."/>
            <person name="Lyukmanova E.N."/>
            <person name="Dolgikh D.A."/>
            <person name="Kirpichnikov M.P."/>
            <person name="Arseniev A.S."/>
        </authorList>
    </citation>
    <scope>STRUCTURE BY NMR OF 640-670</scope>
    <scope>SUBUNIT</scope>
</reference>
<reference key="22">
    <citation type="journal article" date="2007" name="Nature">
        <title>Patterns of somatic mutation in human cancer genomes.</title>
        <authorList>
            <person name="Greenman C."/>
            <person name="Stephens P."/>
            <person name="Smith R."/>
            <person name="Dalgliesh G.L."/>
            <person name="Hunter C."/>
            <person name="Bignell G."/>
            <person name="Davies H."/>
            <person name="Teague J."/>
            <person name="Butler A."/>
            <person name="Stevens C."/>
            <person name="Edkins S."/>
            <person name="O'Meara S."/>
            <person name="Vastrik I."/>
            <person name="Schmidt E.E."/>
            <person name="Avis T."/>
            <person name="Barthorpe S."/>
            <person name="Bhamra G."/>
            <person name="Buck G."/>
            <person name="Choudhury B."/>
            <person name="Clements J."/>
            <person name="Cole J."/>
            <person name="Dicks E."/>
            <person name="Forbes S."/>
            <person name="Gray K."/>
            <person name="Halliday K."/>
            <person name="Harrison R."/>
            <person name="Hills K."/>
            <person name="Hinton J."/>
            <person name="Jenkinson A."/>
            <person name="Jones D."/>
            <person name="Menzies A."/>
            <person name="Mironenko T."/>
            <person name="Perry J."/>
            <person name="Raine K."/>
            <person name="Richardson D."/>
            <person name="Shepherd R."/>
            <person name="Small A."/>
            <person name="Tofts C."/>
            <person name="Varian J."/>
            <person name="Webb T."/>
            <person name="West S."/>
            <person name="Widaa S."/>
            <person name="Yates A."/>
            <person name="Cahill D.P."/>
            <person name="Louis D.N."/>
            <person name="Goldstraw P."/>
            <person name="Nicholson A.G."/>
            <person name="Brasseur F."/>
            <person name="Looijenga L."/>
            <person name="Weber B.L."/>
            <person name="Chiew Y.-E."/>
            <person name="DeFazio A."/>
            <person name="Greaves M.F."/>
            <person name="Green A.R."/>
            <person name="Campbell P."/>
            <person name="Birney E."/>
            <person name="Easton D.F."/>
            <person name="Chenevix-Trench G."/>
            <person name="Tan M.-H."/>
            <person name="Khoo S.K."/>
            <person name="Teh B.T."/>
            <person name="Yuen S.T."/>
            <person name="Leung S.Y."/>
            <person name="Wooster R."/>
            <person name="Futreal P.A."/>
            <person name="Stratton M.R."/>
        </authorList>
    </citation>
    <scope>VARIANTS [LARGE SCALE ANALYSIS] TYR-20; LEU-30; MET-104; ILE-204; TRP-683; LEU-717; THR-744; ARG-998; CYS-1119; HIS-1127; ILE-1177 AND LYS-1254</scope>
</reference>
<reference key="23">
    <citation type="journal article" date="2016" name="Leukemia">
        <title>A germline ERBB3 variant is a candidate for predisposition to erythroid MDS/erythroleukemia.</title>
        <authorList>
            <person name="Braunstein E.M."/>
            <person name="Li R."/>
            <person name="Sobreira N."/>
            <person name="Marosy B."/>
            <person name="Hetrick K."/>
            <person name="Doheny K."/>
            <person name="Gocke C.D."/>
            <person name="Valle D."/>
            <person name="Brodsky R.A."/>
            <person name="Cheng L."/>
        </authorList>
    </citation>
    <scope>VARIANT FERLK THR-1337</scope>
    <scope>CHARACTERIZATION OF VARIANT FERLK THR-1337</scope>
    <scope>INVOLVEMENT IN FERLK</scope>
    <scope>FUNCTION</scope>
</reference>
<reference key="24">
    <citation type="journal article" date="2021" name="J. Clin. Invest.">
        <title>Dysregulation of the NRG1/ERBB pathway causes a developmental disorder with gastrointestinal dysmotility in humans.</title>
        <authorList>
            <person name="Le T.L."/>
            <person name="Galmiche L."/>
            <person name="Levy J."/>
            <person name="Suwannarat P."/>
            <person name="Hellebrekers D.M."/>
            <person name="Morarach K."/>
            <person name="Boismoreau F."/>
            <person name="Theunissen T.E."/>
            <person name="Lefebvre M."/>
            <person name="Pelet A."/>
            <person name="Martinovic J."/>
            <person name="Gelot A."/>
            <person name="Guimiot F."/>
            <person name="Calleroz A."/>
            <person name="Gitiaux C."/>
            <person name="Hully M."/>
            <person name="Goulet O."/>
            <person name="Chardot C."/>
            <person name="Drunat S."/>
            <person name="Capri Y."/>
            <person name="Bole-Feysot C."/>
            <person name="Nitschke P."/>
            <person name="Whalen S."/>
            <person name="Mouthon L."/>
            <person name="Babcock H.E."/>
            <person name="Hofstra R."/>
            <person name="de Coo I.F."/>
            <person name="Tabet A.C."/>
            <person name="Molina T.J."/>
            <person name="Keren B."/>
            <person name="Brooks A."/>
            <person name="Smeets H.J."/>
            <person name="Marklund U."/>
            <person name="Gordon C.T."/>
            <person name="Lyonnet S."/>
            <person name="Amiel J."/>
            <person name="Bondurand N."/>
        </authorList>
    </citation>
    <scope>INVOLVEMENT IN VSCN1</scope>
    <scope>VARIANTS VSCN1 PRO-787; SER-873; MET-899 AND ARG-932</scope>
    <scope>CHARACTERIZATION OF VARIANTS VSCN1 PRO-787; SER-873; MET-899 AND ARG-932</scope>
    <scope>SUBCELLULAR LOCATION</scope>
    <scope>PHOSPHORYLATION</scope>
</reference>
<protein>
    <recommendedName>
        <fullName>Receptor tyrosine-protein kinase erbB-3</fullName>
        <ecNumber>2.7.10.1</ecNumber>
    </recommendedName>
    <alternativeName>
        <fullName>Proto-oncogene-like protein c-ErbB-3</fullName>
    </alternativeName>
    <alternativeName>
        <fullName>Tyrosine kinase-type cell surface receptor HER3</fullName>
    </alternativeName>
</protein>
<organism>
    <name type="scientific">Homo sapiens</name>
    <name type="common">Human</name>
    <dbReference type="NCBI Taxonomy" id="9606"/>
    <lineage>
        <taxon>Eukaryota</taxon>
        <taxon>Metazoa</taxon>
        <taxon>Chordata</taxon>
        <taxon>Craniata</taxon>
        <taxon>Vertebrata</taxon>
        <taxon>Euteleostomi</taxon>
        <taxon>Mammalia</taxon>
        <taxon>Eutheria</taxon>
        <taxon>Euarchontoglires</taxon>
        <taxon>Primates</taxon>
        <taxon>Haplorrhini</taxon>
        <taxon>Catarrhini</taxon>
        <taxon>Hominidae</taxon>
        <taxon>Homo</taxon>
    </lineage>
</organism>
<dbReference type="EC" id="2.7.10.1"/>
<dbReference type="EMBL" id="M29366">
    <property type="protein sequence ID" value="AAA35790.1"/>
    <property type="molecule type" value="mRNA"/>
</dbReference>
<dbReference type="EMBL" id="M34309">
    <property type="protein sequence ID" value="AAA35979.1"/>
    <property type="molecule type" value="mRNA"/>
</dbReference>
<dbReference type="EMBL" id="S61953">
    <property type="protein sequence ID" value="AAB26935.1"/>
    <property type="molecule type" value="mRNA"/>
</dbReference>
<dbReference type="EMBL" id="BT007226">
    <property type="protein sequence ID" value="AAP35890.1"/>
    <property type="molecule type" value="mRNA"/>
</dbReference>
<dbReference type="EMBL" id="AK291681">
    <property type="protein sequence ID" value="BAF84370.1"/>
    <property type="molecule type" value="mRNA"/>
</dbReference>
<dbReference type="EMBL" id="AK295650">
    <property type="protein sequence ID" value="BAG58519.1"/>
    <property type="molecule type" value="mRNA"/>
</dbReference>
<dbReference type="EMBL" id="AK300909">
    <property type="protein sequence ID" value="BAG62544.1"/>
    <property type="molecule type" value="mRNA"/>
</dbReference>
<dbReference type="EMBL" id="AC034102">
    <property type="status" value="NOT_ANNOTATED_CDS"/>
    <property type="molecule type" value="Genomic_DNA"/>
</dbReference>
<dbReference type="EMBL" id="BC002706">
    <property type="protein sequence ID" value="AAH02706.1"/>
    <property type="molecule type" value="mRNA"/>
</dbReference>
<dbReference type="EMBL" id="BC082992">
    <property type="protein sequence ID" value="AAH82992.1"/>
    <property type="molecule type" value="mRNA"/>
</dbReference>
<dbReference type="CCDS" id="CCDS31833.1">
    <molecule id="P21860-1"/>
</dbReference>
<dbReference type="CCDS" id="CCDS44918.1">
    <molecule id="P21860-2"/>
</dbReference>
<dbReference type="PIR" id="A36223">
    <property type="entry name" value="A36223"/>
</dbReference>
<dbReference type="PIR" id="JH0803">
    <property type="entry name" value="JH0803"/>
</dbReference>
<dbReference type="RefSeq" id="NP_001005915.1">
    <molecule id="P21860-2"/>
    <property type="nucleotide sequence ID" value="NM_001005915.1"/>
</dbReference>
<dbReference type="RefSeq" id="NP_001973.2">
    <molecule id="P21860-1"/>
    <property type="nucleotide sequence ID" value="NM_001982.4"/>
</dbReference>
<dbReference type="RefSeq" id="XP_047284456.1">
    <molecule id="P21860-4"/>
    <property type="nucleotide sequence ID" value="XM_047428500.1"/>
</dbReference>
<dbReference type="RefSeq" id="XP_047284457.1">
    <molecule id="P21860-4"/>
    <property type="nucleotide sequence ID" value="XM_047428501.1"/>
</dbReference>
<dbReference type="RefSeq" id="XP_054227383.1">
    <molecule id="P21860-4"/>
    <property type="nucleotide sequence ID" value="XM_054371408.1"/>
</dbReference>
<dbReference type="PDB" id="1M6B">
    <property type="method" value="X-ray"/>
    <property type="resolution" value="2.60 A"/>
    <property type="chains" value="A/B=20-640"/>
</dbReference>
<dbReference type="PDB" id="2L9U">
    <property type="method" value="NMR"/>
    <property type="chains" value="A/B=639-670"/>
</dbReference>
<dbReference type="PDB" id="3KEX">
    <property type="method" value="X-ray"/>
    <property type="resolution" value="2.80 A"/>
    <property type="chains" value="A/B=698-1019"/>
</dbReference>
<dbReference type="PDB" id="3LMG">
    <property type="method" value="X-ray"/>
    <property type="resolution" value="2.80 A"/>
    <property type="chains" value="A/B=684-1020"/>
</dbReference>
<dbReference type="PDB" id="3P11">
    <property type="method" value="X-ray"/>
    <property type="resolution" value="3.70 A"/>
    <property type="chains" value="A=20-532"/>
</dbReference>
<dbReference type="PDB" id="4LEO">
    <property type="method" value="X-ray"/>
    <property type="resolution" value="2.64 A"/>
    <property type="chains" value="C=20-631"/>
</dbReference>
<dbReference type="PDB" id="4P59">
    <property type="method" value="X-ray"/>
    <property type="resolution" value="3.40 A"/>
    <property type="chains" value="A=20-640"/>
</dbReference>
<dbReference type="PDB" id="4RIW">
    <property type="method" value="X-ray"/>
    <property type="resolution" value="3.10 A"/>
    <property type="chains" value="A/C=698-1020"/>
</dbReference>
<dbReference type="PDB" id="4RIX">
    <property type="method" value="X-ray"/>
    <property type="resolution" value="3.10 A"/>
    <property type="chains" value="A/C=698-1020"/>
</dbReference>
<dbReference type="PDB" id="4RIY">
    <property type="method" value="X-ray"/>
    <property type="resolution" value="2.98 A"/>
    <property type="chains" value="A/C=698-1020"/>
</dbReference>
<dbReference type="PDB" id="5CUS">
    <property type="method" value="X-ray"/>
    <property type="resolution" value="3.20 A"/>
    <property type="chains" value="A/B/C/D=20-641"/>
</dbReference>
<dbReference type="PDB" id="5O4O">
    <property type="method" value="X-ray"/>
    <property type="resolution" value="3.40 A"/>
    <property type="chains" value="C=1-643"/>
</dbReference>
<dbReference type="PDB" id="5O7P">
    <property type="method" value="X-ray"/>
    <property type="resolution" value="4.50 A"/>
    <property type="chains" value="C=1-643"/>
</dbReference>
<dbReference type="PDB" id="6KBI">
    <property type="method" value="X-ray"/>
    <property type="resolution" value="3.00 A"/>
    <property type="chains" value="A/B=20-639"/>
</dbReference>
<dbReference type="PDB" id="6OP9">
    <property type="method" value="X-ray"/>
    <property type="resolution" value="2.50 A"/>
    <property type="chains" value="A=674-1001"/>
</dbReference>
<dbReference type="PDB" id="7BHE">
    <property type="method" value="X-ray"/>
    <property type="resolution" value="2.30 A"/>
    <property type="chains" value="B/D=500-643"/>
</dbReference>
<dbReference type="PDB" id="7BHF">
    <property type="method" value="X-ray"/>
    <property type="resolution" value="2.00 A"/>
    <property type="chains" value="B/D=500-630"/>
</dbReference>
<dbReference type="PDB" id="7D85">
    <property type="method" value="X-ray"/>
    <property type="resolution" value="2.50 A"/>
    <property type="chains" value="A/D=328-519"/>
</dbReference>
<dbReference type="PDB" id="7MN5">
    <property type="method" value="EM"/>
    <property type="resolution" value="2.93 A"/>
    <property type="chains" value="A=1-1021"/>
</dbReference>
<dbReference type="PDB" id="7MN6">
    <property type="method" value="EM"/>
    <property type="resolution" value="3.09 A"/>
    <property type="chains" value="A=1-1021"/>
</dbReference>
<dbReference type="PDB" id="7MN8">
    <property type="method" value="EM"/>
    <property type="resolution" value="3.45 A"/>
    <property type="chains" value="A=1-1021"/>
</dbReference>
<dbReference type="PDBsum" id="1M6B"/>
<dbReference type="PDBsum" id="2L9U"/>
<dbReference type="PDBsum" id="3KEX"/>
<dbReference type="PDBsum" id="3LMG"/>
<dbReference type="PDBsum" id="3P11"/>
<dbReference type="PDBsum" id="4LEO"/>
<dbReference type="PDBsum" id="4P59"/>
<dbReference type="PDBsum" id="4RIW"/>
<dbReference type="PDBsum" id="4RIX"/>
<dbReference type="PDBsum" id="4RIY"/>
<dbReference type="PDBsum" id="5CUS"/>
<dbReference type="PDBsum" id="5O4O"/>
<dbReference type="PDBsum" id="5O7P"/>
<dbReference type="PDBsum" id="6KBI"/>
<dbReference type="PDBsum" id="6OP9"/>
<dbReference type="PDBsum" id="7BHE"/>
<dbReference type="PDBsum" id="7BHF"/>
<dbReference type="PDBsum" id="7D85"/>
<dbReference type="PDBsum" id="7MN5"/>
<dbReference type="PDBsum" id="7MN6"/>
<dbReference type="PDBsum" id="7MN8"/>
<dbReference type="EMDB" id="EMD-23916"/>
<dbReference type="EMDB" id="EMD-23917"/>
<dbReference type="EMDB" id="EMD-23918"/>
<dbReference type="SMR" id="P21860"/>
<dbReference type="BioGRID" id="108377">
    <property type="interactions" value="334"/>
</dbReference>
<dbReference type="CORUM" id="P21860"/>
<dbReference type="DIP" id="DIP-36441N"/>
<dbReference type="ELM" id="P21860"/>
<dbReference type="FunCoup" id="P21860">
    <property type="interactions" value="1180"/>
</dbReference>
<dbReference type="IntAct" id="P21860">
    <property type="interactions" value="251"/>
</dbReference>
<dbReference type="MINT" id="P21860"/>
<dbReference type="STRING" id="9606.ENSP00000267101"/>
<dbReference type="BindingDB" id="P21860"/>
<dbReference type="ChEMBL" id="CHEMBL5838"/>
<dbReference type="DrugBank" id="DB11652">
    <property type="generic name" value="Tucatinib"/>
</dbReference>
<dbReference type="DrugCentral" id="P21860"/>
<dbReference type="GuidetoPHARMACOLOGY" id="1798"/>
<dbReference type="MoonDB" id="P21860">
    <property type="type" value="Predicted"/>
</dbReference>
<dbReference type="TCDB" id="8.A.23.1.39">
    <property type="family name" value="the basigin (basigin) family"/>
</dbReference>
<dbReference type="CarbonylDB" id="P21860"/>
<dbReference type="GlyConnect" id="1711">
    <property type="glycosylation" value="5 N-Linked glycans (3 sites)"/>
</dbReference>
<dbReference type="GlyCosmos" id="P21860">
    <property type="glycosylation" value="10 sites, 5 glycans"/>
</dbReference>
<dbReference type="GlyGen" id="P21860">
    <property type="glycosylation" value="11 sites, 21 N-linked glycans (4 sites)"/>
</dbReference>
<dbReference type="iPTMnet" id="P21860"/>
<dbReference type="PhosphoSitePlus" id="P21860"/>
<dbReference type="BioMuta" id="ERBB3"/>
<dbReference type="DMDM" id="119534"/>
<dbReference type="CPTAC" id="CPTAC-3176"/>
<dbReference type="CPTAC" id="CPTAC-3177"/>
<dbReference type="CPTAC" id="CPTAC-5766"/>
<dbReference type="CPTAC" id="CPTAC-5767"/>
<dbReference type="CPTAC" id="CPTAC-5768"/>
<dbReference type="CPTAC" id="non-CPTAC-5387"/>
<dbReference type="CPTAC" id="non-CPTAC-5390"/>
<dbReference type="CPTAC" id="non-CPTAC-5548"/>
<dbReference type="CPTAC" id="non-CPTAC-5549"/>
<dbReference type="CPTAC" id="non-CPTAC-5550"/>
<dbReference type="jPOST" id="P21860"/>
<dbReference type="MassIVE" id="P21860"/>
<dbReference type="PaxDb" id="9606-ENSP00000267101"/>
<dbReference type="PeptideAtlas" id="P21860"/>
<dbReference type="ProteomicsDB" id="53934">
    <molecule id="P21860-1"/>
</dbReference>
<dbReference type="ProteomicsDB" id="53935">
    <molecule id="P21860-2"/>
</dbReference>
<dbReference type="ProteomicsDB" id="53936">
    <molecule id="P21860-3"/>
</dbReference>
<dbReference type="ProteomicsDB" id="53937">
    <molecule id="P21860-4"/>
</dbReference>
<dbReference type="ProteomicsDB" id="53938">
    <molecule id="P21860-5"/>
</dbReference>
<dbReference type="ABCD" id="P21860">
    <property type="antibodies" value="107 sequenced antibodies"/>
</dbReference>
<dbReference type="Antibodypedia" id="3428">
    <property type="antibodies" value="2790 antibodies from 54 providers"/>
</dbReference>
<dbReference type="CPTC" id="P21860">
    <property type="antibodies" value="3 antibodies"/>
</dbReference>
<dbReference type="DNASU" id="2065"/>
<dbReference type="Ensembl" id="ENST00000267101.8">
    <molecule id="P21860-1"/>
    <property type="protein sequence ID" value="ENSP00000267101.4"/>
    <property type="gene ID" value="ENSG00000065361.17"/>
</dbReference>
<dbReference type="Ensembl" id="ENST00000411731.6">
    <molecule id="P21860-2"/>
    <property type="protein sequence ID" value="ENSP00000415753.2"/>
    <property type="gene ID" value="ENSG00000065361.17"/>
</dbReference>
<dbReference type="Ensembl" id="ENST00000415288.6">
    <molecule id="P21860-4"/>
    <property type="protein sequence ID" value="ENSP00000408340.2"/>
    <property type="gene ID" value="ENSG00000065361.17"/>
</dbReference>
<dbReference type="Ensembl" id="ENST00000551242.5">
    <molecule id="P21860-3"/>
    <property type="protein sequence ID" value="ENSP00000447510.1"/>
    <property type="gene ID" value="ENSG00000065361.17"/>
</dbReference>
<dbReference type="Ensembl" id="ENST00000683018.1">
    <molecule id="P21860-4"/>
    <property type="protein sequence ID" value="ENSP00000506822.1"/>
    <property type="gene ID" value="ENSG00000065361.17"/>
</dbReference>
<dbReference type="Ensembl" id="ENST00000683059.1">
    <molecule id="P21860-4"/>
    <property type="protein sequence ID" value="ENSP00000507402.1"/>
    <property type="gene ID" value="ENSG00000065361.17"/>
</dbReference>
<dbReference type="Ensembl" id="ENST00000683164.1">
    <molecule id="P21860-4"/>
    <property type="protein sequence ID" value="ENSP00000508051.1"/>
    <property type="gene ID" value="ENSG00000065361.17"/>
</dbReference>
<dbReference type="GeneID" id="2065"/>
<dbReference type="KEGG" id="hsa:2065"/>
<dbReference type="MANE-Select" id="ENST00000267101.8">
    <property type="protein sequence ID" value="ENSP00000267101.4"/>
    <property type="RefSeq nucleotide sequence ID" value="NM_001982.4"/>
    <property type="RefSeq protein sequence ID" value="NP_001973.2"/>
</dbReference>
<dbReference type="UCSC" id="uc001sjg.4">
    <molecule id="P21860-1"/>
    <property type="organism name" value="human"/>
</dbReference>
<dbReference type="AGR" id="HGNC:3431"/>
<dbReference type="CTD" id="2065"/>
<dbReference type="DisGeNET" id="2065"/>
<dbReference type="GeneCards" id="ERBB3"/>
<dbReference type="HGNC" id="HGNC:3431">
    <property type="gene designation" value="ERBB3"/>
</dbReference>
<dbReference type="HPA" id="ENSG00000065361">
    <property type="expression patterns" value="Low tissue specificity"/>
</dbReference>
<dbReference type="MalaCards" id="ERBB3"/>
<dbReference type="MIM" id="133180">
    <property type="type" value="phenotype"/>
</dbReference>
<dbReference type="MIM" id="190151">
    <property type="type" value="gene"/>
</dbReference>
<dbReference type="MIM" id="243180">
    <property type="type" value="phenotype"/>
</dbReference>
<dbReference type="MIM" id="607598">
    <property type="type" value="phenotype"/>
</dbReference>
<dbReference type="neXtProt" id="NX_P21860"/>
<dbReference type="OpenTargets" id="ENSG00000065361"/>
<dbReference type="Orphanet" id="388">
    <property type="disease" value="Hirschsprung disease"/>
</dbReference>
<dbReference type="Orphanet" id="137776">
    <property type="disease" value="Lethal congenital contracture syndrome type 2"/>
</dbReference>
<dbReference type="PharmGKB" id="PA27846"/>
<dbReference type="VEuPathDB" id="HostDB:ENSG00000065361"/>
<dbReference type="eggNOG" id="KOG1025">
    <property type="taxonomic scope" value="Eukaryota"/>
</dbReference>
<dbReference type="GeneTree" id="ENSGT00940000156107"/>
<dbReference type="HOGENOM" id="CLU_003384_3_0_1"/>
<dbReference type="InParanoid" id="P21860"/>
<dbReference type="OMA" id="GACETLC"/>
<dbReference type="OrthoDB" id="6219513at2759"/>
<dbReference type="PAN-GO" id="P21860">
    <property type="GO annotations" value="10 GO annotations based on evolutionary models"/>
</dbReference>
<dbReference type="PhylomeDB" id="P21860"/>
<dbReference type="TreeFam" id="TF106002"/>
<dbReference type="BRENDA" id="2.7.10.1">
    <property type="organism ID" value="2681"/>
</dbReference>
<dbReference type="PathwayCommons" id="P21860"/>
<dbReference type="Reactome" id="R-HSA-1227986">
    <molecule id="P21860-1"/>
    <property type="pathway name" value="Signaling by ERBB2"/>
</dbReference>
<dbReference type="Reactome" id="R-HSA-1236394">
    <molecule id="P21860-1"/>
    <property type="pathway name" value="Signaling by ERBB4"/>
</dbReference>
<dbReference type="Reactome" id="R-HSA-1250196">
    <molecule id="P21860-1"/>
    <property type="pathway name" value="SHC1 events in ERBB2 signaling"/>
</dbReference>
<dbReference type="Reactome" id="R-HSA-1257604">
    <molecule id="P21860-1"/>
    <property type="pathway name" value="PIP3 activates AKT signaling"/>
</dbReference>
<dbReference type="Reactome" id="R-HSA-1306955">
    <molecule id="P21860-1"/>
    <property type="pathway name" value="GRB7 events in ERBB2 signaling"/>
</dbReference>
<dbReference type="Reactome" id="R-HSA-1358803">
    <molecule id="P21860-1"/>
    <property type="pathway name" value="Downregulation of ERBB2:ERBB3 signaling"/>
</dbReference>
<dbReference type="Reactome" id="R-HSA-1963642">
    <molecule id="P21860-1"/>
    <property type="pathway name" value="PI3K events in ERBB2 signaling"/>
</dbReference>
<dbReference type="Reactome" id="R-HSA-2219530">
    <molecule id="P21860-1"/>
    <property type="pathway name" value="Constitutive Signaling by Aberrant PI3K in Cancer"/>
</dbReference>
<dbReference type="Reactome" id="R-HSA-5673001">
    <molecule id="P21860-1"/>
    <property type="pathway name" value="RAF/MAP kinase cascade"/>
</dbReference>
<dbReference type="Reactome" id="R-HSA-6785631">
    <molecule id="P21860-1"/>
    <property type="pathway name" value="ERBB2 Regulates Cell Motility"/>
</dbReference>
<dbReference type="Reactome" id="R-HSA-6811558">
    <molecule id="P21860-1"/>
    <property type="pathway name" value="PI5P, PP2A and IER3 Regulate PI3K/AKT Signaling"/>
</dbReference>
<dbReference type="Reactome" id="R-HSA-8847993">
    <molecule id="P21860-1"/>
    <property type="pathway name" value="ERBB2 Activates PTK6 Signaling"/>
</dbReference>
<dbReference type="Reactome" id="R-HSA-8863795">
    <molecule id="P21860-1"/>
    <property type="pathway name" value="Downregulation of ERBB2 signaling"/>
</dbReference>
<dbReference type="Reactome" id="R-HSA-9664565">
    <molecule id="P21860-1"/>
    <property type="pathway name" value="Signaling by ERBB2 KD Mutants"/>
</dbReference>
<dbReference type="Reactome" id="R-HSA-9665686">
    <molecule id="P21860-1"/>
    <property type="pathway name" value="Signaling by ERBB2 TMD/JMD mutants"/>
</dbReference>
<dbReference type="SignaLink" id="P21860"/>
<dbReference type="SIGNOR" id="P21860"/>
<dbReference type="BioGRID-ORCS" id="2065">
    <property type="hits" value="88 hits in 1201 CRISPR screens"/>
</dbReference>
<dbReference type="ChiTaRS" id="ERBB3">
    <property type="organism name" value="human"/>
</dbReference>
<dbReference type="EvolutionaryTrace" id="P21860"/>
<dbReference type="GeneWiki" id="ERBB3"/>
<dbReference type="GenomeRNAi" id="2065"/>
<dbReference type="Pharos" id="P21860">
    <property type="development level" value="Tclin"/>
</dbReference>
<dbReference type="PRO" id="PR:P21860"/>
<dbReference type="Proteomes" id="UP000005640">
    <property type="component" value="Chromosome 12"/>
</dbReference>
<dbReference type="RNAct" id="P21860">
    <property type="molecule type" value="protein"/>
</dbReference>
<dbReference type="Bgee" id="ENSG00000065361">
    <property type="expression patterns" value="Expressed in trigeminal ganglion and 191 other cell types or tissues"/>
</dbReference>
<dbReference type="ExpressionAtlas" id="P21860">
    <property type="expression patterns" value="baseline and differential"/>
</dbReference>
<dbReference type="GO" id="GO:0016324">
    <property type="term" value="C:apical plasma membrane"/>
    <property type="evidence" value="ECO:0007669"/>
    <property type="project" value="Ensembl"/>
</dbReference>
<dbReference type="GO" id="GO:0009925">
    <property type="term" value="C:basal plasma membrane"/>
    <property type="evidence" value="ECO:0000318"/>
    <property type="project" value="GO_Central"/>
</dbReference>
<dbReference type="GO" id="GO:0016323">
    <property type="term" value="C:basolateral plasma membrane"/>
    <property type="evidence" value="ECO:0000314"/>
    <property type="project" value="BHF-UCL"/>
</dbReference>
<dbReference type="GO" id="GO:0038143">
    <property type="term" value="C:ERBB3:ERBB2 complex"/>
    <property type="evidence" value="ECO:0000314"/>
    <property type="project" value="UniProtKB"/>
</dbReference>
<dbReference type="GO" id="GO:0005615">
    <property type="term" value="C:extracellular space"/>
    <property type="evidence" value="ECO:0000314"/>
    <property type="project" value="BHF-UCL"/>
</dbReference>
<dbReference type="GO" id="GO:0016328">
    <property type="term" value="C:lateral plasma membrane"/>
    <property type="evidence" value="ECO:0007669"/>
    <property type="project" value="Ensembl"/>
</dbReference>
<dbReference type="GO" id="GO:0005886">
    <property type="term" value="C:plasma membrane"/>
    <property type="evidence" value="ECO:0000318"/>
    <property type="project" value="GO_Central"/>
</dbReference>
<dbReference type="GO" id="GO:0043235">
    <property type="term" value="C:receptor complex"/>
    <property type="evidence" value="ECO:0000314"/>
    <property type="project" value="MGI"/>
</dbReference>
<dbReference type="GO" id="GO:0005524">
    <property type="term" value="F:ATP binding"/>
    <property type="evidence" value="ECO:0007669"/>
    <property type="project" value="UniProtKB-KW"/>
</dbReference>
<dbReference type="GO" id="GO:0043125">
    <property type="term" value="F:ErbB-3 class receptor binding"/>
    <property type="evidence" value="ECO:0000353"/>
    <property type="project" value="UniProtKB"/>
</dbReference>
<dbReference type="GO" id="GO:0019838">
    <property type="term" value="F:growth factor binding"/>
    <property type="evidence" value="ECO:0000353"/>
    <property type="project" value="BHF-UCL"/>
</dbReference>
<dbReference type="GO" id="GO:0042802">
    <property type="term" value="F:identical protein binding"/>
    <property type="evidence" value="ECO:0000353"/>
    <property type="project" value="IntAct"/>
</dbReference>
<dbReference type="GO" id="GO:0038132">
    <property type="term" value="F:neuregulin binding"/>
    <property type="evidence" value="ECO:0000314"/>
    <property type="project" value="UniProtKB"/>
</dbReference>
<dbReference type="GO" id="GO:0038131">
    <property type="term" value="F:neuregulin receptor activity"/>
    <property type="evidence" value="ECO:0000318"/>
    <property type="project" value="GO_Central"/>
</dbReference>
<dbReference type="GO" id="GO:0046982">
    <property type="term" value="F:protein heterodimerization activity"/>
    <property type="evidence" value="ECO:0000353"/>
    <property type="project" value="BHF-UCL"/>
</dbReference>
<dbReference type="GO" id="GO:0004672">
    <property type="term" value="F:protein kinase activity"/>
    <property type="evidence" value="ECO:0007669"/>
    <property type="project" value="InterPro"/>
</dbReference>
<dbReference type="GO" id="GO:0030296">
    <property type="term" value="F:protein tyrosine kinase activator activity"/>
    <property type="evidence" value="ECO:0000314"/>
    <property type="project" value="BHF-UCL"/>
</dbReference>
<dbReference type="GO" id="GO:0004888">
    <property type="term" value="F:transmembrane signaling receptor activity"/>
    <property type="evidence" value="ECO:0000250"/>
    <property type="project" value="BHF-UCL"/>
</dbReference>
<dbReference type="GO" id="GO:0031625">
    <property type="term" value="F:ubiquitin protein ligase binding"/>
    <property type="evidence" value="ECO:0000353"/>
    <property type="project" value="CAFA"/>
</dbReference>
<dbReference type="GO" id="GO:0007169">
    <property type="term" value="P:cell surface receptor protein tyrosine kinase signaling pathway"/>
    <property type="evidence" value="ECO:0000314"/>
    <property type="project" value="BHF-UCL"/>
</dbReference>
<dbReference type="GO" id="GO:0021545">
    <property type="term" value="P:cranial nerve development"/>
    <property type="evidence" value="ECO:0000250"/>
    <property type="project" value="BHF-UCL"/>
</dbReference>
<dbReference type="GO" id="GO:0003197">
    <property type="term" value="P:endocardial cushion development"/>
    <property type="evidence" value="ECO:0007669"/>
    <property type="project" value="Ensembl"/>
</dbReference>
<dbReference type="GO" id="GO:0007173">
    <property type="term" value="P:epidermal growth factor receptor signaling pathway"/>
    <property type="evidence" value="ECO:0000318"/>
    <property type="project" value="GO_Central"/>
</dbReference>
<dbReference type="GO" id="GO:0038133">
    <property type="term" value="P:ERBB2-ERBB3 signaling pathway"/>
    <property type="evidence" value="ECO:0007669"/>
    <property type="project" value="Ensembl"/>
</dbReference>
<dbReference type="GO" id="GO:0097192">
    <property type="term" value="P:extrinsic apoptotic signaling pathway in absence of ligand"/>
    <property type="evidence" value="ECO:0000315"/>
    <property type="project" value="BHF-UCL"/>
</dbReference>
<dbReference type="GO" id="GO:0007507">
    <property type="term" value="P:heart development"/>
    <property type="evidence" value="ECO:0000250"/>
    <property type="project" value="BHF-UCL"/>
</dbReference>
<dbReference type="GO" id="GO:0097049">
    <property type="term" value="P:motor neuron apoptotic process"/>
    <property type="evidence" value="ECO:0007669"/>
    <property type="project" value="Ensembl"/>
</dbReference>
<dbReference type="GO" id="GO:0042552">
    <property type="term" value="P:myelination"/>
    <property type="evidence" value="ECO:0007669"/>
    <property type="project" value="Ensembl"/>
</dbReference>
<dbReference type="GO" id="GO:0043066">
    <property type="term" value="P:negative regulation of apoptotic process"/>
    <property type="evidence" value="ECO:0000318"/>
    <property type="project" value="GO_Central"/>
</dbReference>
<dbReference type="GO" id="GO:0007162">
    <property type="term" value="P:negative regulation of cell adhesion"/>
    <property type="evidence" value="ECO:0000314"/>
    <property type="project" value="BHF-UCL"/>
</dbReference>
<dbReference type="GO" id="GO:2000672">
    <property type="term" value="P:negative regulation of motor neuron apoptotic process"/>
    <property type="evidence" value="ECO:0007669"/>
    <property type="project" value="Ensembl"/>
</dbReference>
<dbReference type="GO" id="GO:0043524">
    <property type="term" value="P:negative regulation of neuron apoptotic process"/>
    <property type="evidence" value="ECO:0000250"/>
    <property type="project" value="BHF-UCL"/>
</dbReference>
<dbReference type="GO" id="GO:0051048">
    <property type="term" value="P:negative regulation of secretion"/>
    <property type="evidence" value="ECO:0000314"/>
    <property type="project" value="BHF-UCL"/>
</dbReference>
<dbReference type="GO" id="GO:0009968">
    <property type="term" value="P:negative regulation of signal transduction"/>
    <property type="evidence" value="ECO:0000314"/>
    <property type="project" value="BHF-UCL"/>
</dbReference>
<dbReference type="GO" id="GO:0051402">
    <property type="term" value="P:neuron apoptotic process"/>
    <property type="evidence" value="ECO:0000315"/>
    <property type="project" value="BHF-UCL"/>
</dbReference>
<dbReference type="GO" id="GO:0030182">
    <property type="term" value="P:neuron differentiation"/>
    <property type="evidence" value="ECO:0000318"/>
    <property type="project" value="GO_Central"/>
</dbReference>
<dbReference type="GO" id="GO:0007422">
    <property type="term" value="P:peripheral nervous system development"/>
    <property type="evidence" value="ECO:0000250"/>
    <property type="project" value="BHF-UCL"/>
</dbReference>
<dbReference type="GO" id="GO:0043491">
    <property type="term" value="P:phosphatidylinositol 3-kinase/protein kinase B signal transduction"/>
    <property type="evidence" value="ECO:0000314"/>
    <property type="project" value="BHF-UCL"/>
</dbReference>
<dbReference type="GO" id="GO:0070886">
    <property type="term" value="P:positive regulation of calcineurin-NFAT signaling cascade"/>
    <property type="evidence" value="ECO:0007669"/>
    <property type="project" value="Ensembl"/>
</dbReference>
<dbReference type="GO" id="GO:0055025">
    <property type="term" value="P:positive regulation of cardiac muscle tissue development"/>
    <property type="evidence" value="ECO:0007669"/>
    <property type="project" value="Ensembl"/>
</dbReference>
<dbReference type="GO" id="GO:0050679">
    <property type="term" value="P:positive regulation of epithelial cell proliferation"/>
    <property type="evidence" value="ECO:0000318"/>
    <property type="project" value="GO_Central"/>
</dbReference>
<dbReference type="GO" id="GO:0010628">
    <property type="term" value="P:positive regulation of gene expression"/>
    <property type="evidence" value="ECO:0007669"/>
    <property type="project" value="Ensembl"/>
</dbReference>
<dbReference type="GO" id="GO:0043410">
    <property type="term" value="P:positive regulation of MAPK cascade"/>
    <property type="evidence" value="ECO:0000318"/>
    <property type="project" value="GO_Central"/>
</dbReference>
<dbReference type="GO" id="GO:0051897">
    <property type="term" value="P:positive regulation of phosphatidylinositol 3-kinase/protein kinase B signal transduction"/>
    <property type="evidence" value="ECO:0000304"/>
    <property type="project" value="BHF-UCL"/>
</dbReference>
<dbReference type="GO" id="GO:0042127">
    <property type="term" value="P:regulation of cell population proliferation"/>
    <property type="evidence" value="ECO:0000314"/>
    <property type="project" value="BHF-UCL"/>
</dbReference>
<dbReference type="GO" id="GO:0014044">
    <property type="term" value="P:Schwann cell development"/>
    <property type="evidence" value="ECO:0007669"/>
    <property type="project" value="Ensembl"/>
</dbReference>
<dbReference type="GO" id="GO:0014037">
    <property type="term" value="P:Schwann cell differentiation"/>
    <property type="evidence" value="ECO:0000250"/>
    <property type="project" value="BHF-UCL"/>
</dbReference>
<dbReference type="GO" id="GO:0007165">
    <property type="term" value="P:signal transduction"/>
    <property type="evidence" value="ECO:0000314"/>
    <property type="project" value="UniProtKB"/>
</dbReference>
<dbReference type="GO" id="GO:0042060">
    <property type="term" value="P:wound healing"/>
    <property type="evidence" value="ECO:0000303"/>
    <property type="project" value="BHF-UCL"/>
</dbReference>
<dbReference type="CDD" id="cd00064">
    <property type="entry name" value="FU"/>
    <property type="match status" value="3"/>
</dbReference>
<dbReference type="CDD" id="cd05111">
    <property type="entry name" value="PTK_HER3"/>
    <property type="match status" value="1"/>
</dbReference>
<dbReference type="CDD" id="cd12095">
    <property type="entry name" value="TM_ErbB3"/>
    <property type="match status" value="1"/>
</dbReference>
<dbReference type="FunFam" id="2.10.220.10:FF:000001">
    <property type="entry name" value="Receptor protein-tyrosine kinase"/>
    <property type="match status" value="1"/>
</dbReference>
<dbReference type="FunFam" id="3.80.20.20:FF:000003">
    <property type="entry name" value="Receptor protein-tyrosine kinase"/>
    <property type="match status" value="1"/>
</dbReference>
<dbReference type="FunFam" id="3.80.20.20:FF:000004">
    <property type="entry name" value="Receptor protein-tyrosine kinase"/>
    <property type="match status" value="1"/>
</dbReference>
<dbReference type="FunFam" id="2.10.220.10:FF:000016">
    <property type="entry name" value="Receptor tyrosine-protein kinase erbB-3"/>
    <property type="match status" value="1"/>
</dbReference>
<dbReference type="FunFam" id="3.30.200.20:FF:000276">
    <property type="entry name" value="Receptor tyrosine-protein kinase erbB-3"/>
    <property type="match status" value="1"/>
</dbReference>
<dbReference type="FunFam" id="1.10.510.10:FF:000233">
    <property type="entry name" value="receptor tyrosine-protein kinase erbB-3"/>
    <property type="match status" value="1"/>
</dbReference>
<dbReference type="FunFam" id="1.20.890.10:FF:000007">
    <property type="entry name" value="receptor tyrosine-protein kinase erbB-3"/>
    <property type="match status" value="1"/>
</dbReference>
<dbReference type="Gene3D" id="1.20.890.10">
    <property type="entry name" value="cAMP-dependent protein kinase regulatory subunit, dimerization-anchoring domain"/>
    <property type="match status" value="1"/>
</dbReference>
<dbReference type="Gene3D" id="2.10.220.10">
    <property type="entry name" value="Hormone Receptor, Insulin-like Growth Factor Receptor 1, Chain A, domain 2"/>
    <property type="match status" value="2"/>
</dbReference>
<dbReference type="Gene3D" id="3.30.200.20">
    <property type="entry name" value="Phosphorylase Kinase, domain 1"/>
    <property type="match status" value="1"/>
</dbReference>
<dbReference type="Gene3D" id="3.80.20.20">
    <property type="entry name" value="Receptor L-domain"/>
    <property type="match status" value="2"/>
</dbReference>
<dbReference type="Gene3D" id="1.10.510.10">
    <property type="entry name" value="Transferase(Phosphotransferase) domain 1"/>
    <property type="match status" value="1"/>
</dbReference>
<dbReference type="InterPro" id="IPR006211">
    <property type="entry name" value="Furin-like_Cys-rich_dom"/>
</dbReference>
<dbReference type="InterPro" id="IPR006212">
    <property type="entry name" value="Furin_repeat"/>
</dbReference>
<dbReference type="InterPro" id="IPR032778">
    <property type="entry name" value="GF_recep_IV"/>
</dbReference>
<dbReference type="InterPro" id="IPR009030">
    <property type="entry name" value="Growth_fac_rcpt_cys_sf"/>
</dbReference>
<dbReference type="InterPro" id="IPR011009">
    <property type="entry name" value="Kinase-like_dom_sf"/>
</dbReference>
<dbReference type="InterPro" id="IPR000719">
    <property type="entry name" value="Prot_kinase_dom"/>
</dbReference>
<dbReference type="InterPro" id="IPR000494">
    <property type="entry name" value="Rcpt_L-dom"/>
</dbReference>
<dbReference type="InterPro" id="IPR036941">
    <property type="entry name" value="Rcpt_L-dom_sf"/>
</dbReference>
<dbReference type="InterPro" id="IPR050122">
    <property type="entry name" value="RTK"/>
</dbReference>
<dbReference type="InterPro" id="IPR001245">
    <property type="entry name" value="Ser-Thr/Tyr_kinase_cat_dom"/>
</dbReference>
<dbReference type="InterPro" id="IPR016245">
    <property type="entry name" value="Tyr_kinase_EGF/ERB/XmrK_rcpt"/>
</dbReference>
<dbReference type="PANTHER" id="PTHR24416:SF88">
    <property type="entry name" value="RECEPTOR TYROSINE-PROTEIN KINASE ERBB-3"/>
    <property type="match status" value="1"/>
</dbReference>
<dbReference type="PANTHER" id="PTHR24416">
    <property type="entry name" value="TYROSINE-PROTEIN KINASE RECEPTOR"/>
    <property type="match status" value="1"/>
</dbReference>
<dbReference type="Pfam" id="PF00757">
    <property type="entry name" value="Furin-like"/>
    <property type="match status" value="1"/>
</dbReference>
<dbReference type="Pfam" id="PF14843">
    <property type="entry name" value="GF_recep_IV"/>
    <property type="match status" value="1"/>
</dbReference>
<dbReference type="Pfam" id="PF07714">
    <property type="entry name" value="PK_Tyr_Ser-Thr"/>
    <property type="match status" value="1"/>
</dbReference>
<dbReference type="Pfam" id="PF01030">
    <property type="entry name" value="Recep_L_domain"/>
    <property type="match status" value="2"/>
</dbReference>
<dbReference type="PIRSF" id="PIRSF000619">
    <property type="entry name" value="TyrPK_EGF-R"/>
    <property type="match status" value="1"/>
</dbReference>
<dbReference type="PRINTS" id="PR00109">
    <property type="entry name" value="TYRKINASE"/>
</dbReference>
<dbReference type="SMART" id="SM00261">
    <property type="entry name" value="FU"/>
    <property type="match status" value="5"/>
</dbReference>
<dbReference type="SUPFAM" id="SSF57184">
    <property type="entry name" value="Growth factor receptor domain"/>
    <property type="match status" value="2"/>
</dbReference>
<dbReference type="SUPFAM" id="SSF52058">
    <property type="entry name" value="L domain-like"/>
    <property type="match status" value="2"/>
</dbReference>
<dbReference type="SUPFAM" id="SSF56112">
    <property type="entry name" value="Protein kinase-like (PK-like)"/>
    <property type="match status" value="1"/>
</dbReference>
<dbReference type="PROSITE" id="PS50011">
    <property type="entry name" value="PROTEIN_KINASE_DOM"/>
    <property type="match status" value="1"/>
</dbReference>
<evidence type="ECO:0000250" key="1"/>
<evidence type="ECO:0000250" key="2">
    <source>
        <dbReference type="UniProtKB" id="Q61526"/>
    </source>
</evidence>
<evidence type="ECO:0000255" key="3"/>
<evidence type="ECO:0000255" key="4">
    <source>
        <dbReference type="PROSITE-ProRule" id="PRU00159"/>
    </source>
</evidence>
<evidence type="ECO:0000256" key="5">
    <source>
        <dbReference type="SAM" id="MobiDB-lite"/>
    </source>
</evidence>
<evidence type="ECO:0000269" key="6">
    <source>
    </source>
</evidence>
<evidence type="ECO:0000269" key="7">
    <source>
    </source>
</evidence>
<evidence type="ECO:0000269" key="8">
    <source>
    </source>
</evidence>
<evidence type="ECO:0000269" key="9">
    <source>
    </source>
</evidence>
<evidence type="ECO:0000269" key="10">
    <source>
    </source>
</evidence>
<evidence type="ECO:0000269" key="11">
    <source>
    </source>
</evidence>
<evidence type="ECO:0000269" key="12">
    <source>
    </source>
</evidence>
<evidence type="ECO:0000269" key="13">
    <source>
    </source>
</evidence>
<evidence type="ECO:0000269" key="14">
    <source>
    </source>
</evidence>
<evidence type="ECO:0000269" key="15">
    <source>
    </source>
</evidence>
<evidence type="ECO:0000269" key="16">
    <source>
    </source>
</evidence>
<evidence type="ECO:0000269" key="17">
    <source>
    </source>
</evidence>
<evidence type="ECO:0000303" key="18">
    <source>
    </source>
</evidence>
<evidence type="ECO:0000303" key="19">
    <source>
    </source>
</evidence>
<evidence type="ECO:0000303" key="20">
    <source>
    </source>
</evidence>
<evidence type="ECO:0000303" key="21">
    <source ref="4"/>
</evidence>
<evidence type="ECO:0000305" key="22"/>
<evidence type="ECO:0007744" key="23">
    <source>
    </source>
</evidence>
<evidence type="ECO:0007744" key="24">
    <source>
    </source>
</evidence>
<evidence type="ECO:0007829" key="25">
    <source>
        <dbReference type="PDB" id="1M6B"/>
    </source>
</evidence>
<evidence type="ECO:0007829" key="26">
    <source>
        <dbReference type="PDB" id="2L9U"/>
    </source>
</evidence>
<evidence type="ECO:0007829" key="27">
    <source>
        <dbReference type="PDB" id="3KEX"/>
    </source>
</evidence>
<evidence type="ECO:0007829" key="28">
    <source>
        <dbReference type="PDB" id="3LMG"/>
    </source>
</evidence>
<evidence type="ECO:0007829" key="29">
    <source>
        <dbReference type="PDB" id="4LEO"/>
    </source>
</evidence>
<evidence type="ECO:0007829" key="30">
    <source>
        <dbReference type="PDB" id="4RIY"/>
    </source>
</evidence>
<evidence type="ECO:0007829" key="31">
    <source>
        <dbReference type="PDB" id="5CUS"/>
    </source>
</evidence>
<evidence type="ECO:0007829" key="32">
    <source>
        <dbReference type="PDB" id="6OP9"/>
    </source>
</evidence>
<evidence type="ECO:0007829" key="33">
    <source>
        <dbReference type="PDB" id="7BHE"/>
    </source>
</evidence>
<evidence type="ECO:0007829" key="34">
    <source>
        <dbReference type="PDB" id="7BHF"/>
    </source>
</evidence>
<evidence type="ECO:0007829" key="35">
    <source>
        <dbReference type="PDB" id="7D85"/>
    </source>
</evidence>
<evidence type="ECO:0007829" key="36">
    <source>
        <dbReference type="PDB" id="7MN5"/>
    </source>
</evidence>
<evidence type="ECO:0007829" key="37">
    <source>
        <dbReference type="PDB" id="7MN6"/>
    </source>
</evidence>
<comment type="function">
    <text evidence="9 14 15">Tyrosine-protein kinase that plays an essential role as cell surface receptor for neuregulins. Binds to neuregulin-1 (NRG1) and is activated by it; ligand-binding increases phosphorylation on tyrosine residues and promotes its association with the p85 subunit of phosphatidylinositol 3-kinase (PubMed:20682778). May also be activated by CSPG5 (PubMed:15358134). Involved in the regulation of myeloid cell differentiation (PubMed:27416908).</text>
</comment>
<comment type="catalytic activity">
    <reaction evidence="13">
        <text>L-tyrosyl-[protein] + ATP = O-phospho-L-tyrosyl-[protein] + ADP + H(+)</text>
        <dbReference type="Rhea" id="RHEA:10596"/>
        <dbReference type="Rhea" id="RHEA-COMP:10136"/>
        <dbReference type="Rhea" id="RHEA-COMP:20101"/>
        <dbReference type="ChEBI" id="CHEBI:15378"/>
        <dbReference type="ChEBI" id="CHEBI:30616"/>
        <dbReference type="ChEBI" id="CHEBI:46858"/>
        <dbReference type="ChEBI" id="CHEBI:61978"/>
        <dbReference type="ChEBI" id="CHEBI:456216"/>
        <dbReference type="EC" id="2.7.10.1"/>
    </reaction>
</comment>
<comment type="subunit">
    <text evidence="2 6 8 9 10 14 17 22">Monomer and homodimer. Heterodimer with each of the other ERBB receptors (Potential). Interacts with CSPG5 (PubMed:15358134). Interacts with GRB7 (PubMed:9516479). Interacts with MUC1 (PubMed:12939402). Interacts with MYOC (By similarity). Interacts with isoform 2 of PA2G4 (PubMed:11325528, PubMed:16832058). Found in a ternary complex with NRG1 and ITGAV:ITGB3 or ITGA6:ITGB4 (PubMed:20682778).</text>
</comment>
<comment type="interaction">
    <interactant intactId="EBI-720706">
        <id>P21860</id>
    </interactant>
    <interactant intactId="EBI-1102694">
        <id>P42684</id>
        <label>ABL2</label>
    </interactant>
    <organismsDiffer>false</organismsDiffer>
    <experiments>10</experiments>
</comment>
<comment type="interaction">
    <interactant intactId="EBI-720706">
        <id>P21860</id>
    </interactant>
    <interactant intactId="EBI-886">
        <id>P46108</id>
        <label>CRK</label>
    </interactant>
    <organismsDiffer>false</organismsDiffer>
    <experiments>2</experiments>
</comment>
<comment type="interaction">
    <interactant intactId="EBI-720706">
        <id>P21860</id>
    </interactant>
    <interactant intactId="EBI-910">
        <id>P46109</id>
        <label>CRKL</label>
    </interactant>
    <organismsDiffer>false</organismsDiffer>
    <experiments>3</experiments>
</comment>
<comment type="interaction">
    <interactant intactId="EBI-720706">
        <id>P21860</id>
    </interactant>
    <interactant intactId="EBI-297353">
        <id>P00533</id>
        <label>EGFR</label>
    </interactant>
    <organismsDiffer>false</organismsDiffer>
    <experiments>14</experiments>
</comment>
<comment type="interaction">
    <interactant intactId="EBI-720706">
        <id>P21860</id>
    </interactant>
    <interactant intactId="EBI-641062">
        <id>P04626</id>
        <label>ERBB2</label>
    </interactant>
    <organismsDiffer>false</organismsDiffer>
    <experiments>30</experiments>
</comment>
<comment type="interaction">
    <interactant intactId="EBI-720706">
        <id>P21860</id>
    </interactant>
    <interactant intactId="EBI-720706">
        <id>P21860</id>
        <label>ERBB3</label>
    </interactant>
    <organismsDiffer>false</organismsDiffer>
    <experiments>2</experiments>
</comment>
<comment type="interaction">
    <interactant intactId="EBI-720706">
        <id>P21860</id>
    </interactant>
    <interactant intactId="EBI-80371">
        <id>Q15303</id>
        <label>ERBB4</label>
    </interactant>
    <organismsDiffer>false</organismsDiffer>
    <experiments>4</experiments>
</comment>
<comment type="interaction">
    <interactant intactId="EBI-720706">
        <id>P21860</id>
    </interactant>
    <interactant intactId="EBI-401755">
        <id>P62993</id>
        <label>GRB2</label>
    </interactant>
    <organismsDiffer>false</organismsDiffer>
    <experiments>3</experiments>
</comment>
<comment type="interaction">
    <interactant intactId="EBI-720706">
        <id>P21860</id>
    </interactant>
    <interactant intactId="EBI-970191">
        <id>Q14451</id>
        <label>GRB7</label>
    </interactant>
    <organismsDiffer>false</organismsDiffer>
    <experiments>7</experiments>
</comment>
<comment type="interaction">
    <interactant intactId="EBI-720706">
        <id>P21860</id>
    </interactant>
    <interactant intactId="EBI-3904795">
        <id>P25098</id>
        <label>GRK2</label>
    </interactant>
    <organismsDiffer>false</organismsDiffer>
    <experiments>3</experiments>
</comment>
<comment type="interaction">
    <interactant intactId="EBI-720706">
        <id>P21860</id>
    </interactant>
    <interactant intactId="EBI-346340">
        <id>P08631</id>
        <label>HCK</label>
    </interactant>
    <organismsDiffer>false</organismsDiffer>
    <experiments>2</experiments>
</comment>
<comment type="interaction">
    <interactant intactId="EBI-720706">
        <id>P21860</id>
    </interactant>
    <interactant intactId="EBI-352572">
        <id>P08238</id>
        <label>HSP90AB1</label>
    </interactant>
    <organismsDiffer>false</organismsDiffer>
    <experiments>3</experiments>
</comment>
<comment type="interaction">
    <interactant intactId="EBI-720706">
        <id>P21860</id>
    </interactant>
    <interactant intactId="EBI-2865191">
        <id>Q96JA1</id>
        <label>LRIG1</label>
    </interactant>
    <organismsDiffer>false</organismsDiffer>
    <experiments>2</experiments>
</comment>
<comment type="interaction">
    <interactant intactId="EBI-720706">
        <id>P21860</id>
    </interactant>
    <interactant intactId="EBI-713635">
        <id>O43639</id>
        <label>NCK2</label>
    </interactant>
    <organismsDiffer>false</organismsDiffer>
    <experiments>2</experiments>
</comment>
<comment type="interaction">
    <interactant intactId="EBI-720706">
        <id>P21860</id>
    </interactant>
    <interactant intactId="EBI-15651799">
        <id>Q02297-6</id>
        <label>NRG1</label>
    </interactant>
    <organismsDiffer>false</organismsDiffer>
    <experiments>2</experiments>
</comment>
<comment type="interaction">
    <interactant intactId="EBI-720706">
        <id>P21860</id>
    </interactant>
    <interactant intactId="EBI-2460927">
        <id>Q02297-7</id>
        <label>NRG1</label>
    </interactant>
    <organismsDiffer>false</organismsDiffer>
    <experiments>3</experiments>
</comment>
<comment type="interaction">
    <interactant intactId="EBI-720706">
        <id>P21860</id>
    </interactant>
    <interactant intactId="EBI-2116585">
        <id>P42336</id>
        <label>PIK3CA</label>
    </interactant>
    <organismsDiffer>false</organismsDiffer>
    <experiments>18</experiments>
</comment>
<comment type="interaction">
    <interactant intactId="EBI-720706">
        <id>P21860</id>
    </interactant>
    <interactant intactId="EBI-79464">
        <id>P27986</id>
        <label>PIK3R1</label>
    </interactant>
    <organismsDiffer>false</organismsDiffer>
    <experiments>41</experiments>
</comment>
<comment type="interaction">
    <interactant intactId="EBI-720706">
        <id>P21860</id>
    </interactant>
    <interactant intactId="EBI-346930">
        <id>O00459</id>
        <label>PIK3R2</label>
    </interactant>
    <organismsDiffer>false</organismsDiffer>
    <experiments>16</experiments>
</comment>
<comment type="interaction">
    <interactant intactId="EBI-720706">
        <id>P21860</id>
    </interactant>
    <interactant intactId="EBI-79893">
        <id>Q92569</id>
        <label>PIK3R3</label>
    </interactant>
    <organismsDiffer>false</organismsDiffer>
    <experiments>22</experiments>
</comment>
<comment type="interaction">
    <interactant intactId="EBI-720706">
        <id>P21860</id>
    </interactant>
    <interactant intactId="EBI-79387">
        <id>P19174</id>
        <label>PLCG1</label>
    </interactant>
    <organismsDiffer>false</organismsDiffer>
    <experiments>4</experiments>
</comment>
<comment type="interaction">
    <interactant intactId="EBI-720706">
        <id>P21860</id>
    </interactant>
    <interactant intactId="EBI-1026476">
        <id>P20936</id>
        <label>RASA1</label>
    </interactant>
    <organismsDiffer>false</organismsDiffer>
    <experiments>6</experiments>
</comment>
<comment type="interaction">
    <interactant intactId="EBI-720706">
        <id>P21860</id>
    </interactant>
    <interactant intactId="EBI-366017">
        <id>Q13671</id>
        <label>RIN1</label>
    </interactant>
    <organismsDiffer>false</organismsDiffer>
    <experiments>2</experiments>
</comment>
<comment type="interaction">
    <interactant intactId="EBI-720706">
        <id>P21860</id>
    </interactant>
    <interactant intactId="EBI-717058">
        <id>P26447</id>
        <label>S100A4</label>
    </interactant>
    <organismsDiffer>false</organismsDiffer>
    <experiments>4</experiments>
</comment>
<comment type="interaction">
    <interactant intactId="EBI-720706">
        <id>P21860</id>
    </interactant>
    <interactant intactId="EBI-458391">
        <id>P04271</id>
        <label>S100B</label>
    </interactant>
    <organismsDiffer>false</organismsDiffer>
    <experiments>3</experiments>
</comment>
<comment type="interaction">
    <interactant intactId="EBI-720706">
        <id>P21860</id>
    </interactant>
    <interactant intactId="EBI-7879749">
        <id>Q9UQQ2</id>
        <label>SH2B3</label>
    </interactant>
    <organismsDiffer>false</organismsDiffer>
    <experiments>2</experiments>
</comment>
<comment type="interaction">
    <interactant intactId="EBI-720706">
        <id>P21860</id>
    </interactant>
    <interactant intactId="EBI-78835">
        <id>P29353</id>
        <label>SHC1</label>
    </interactant>
    <organismsDiffer>false</organismsDiffer>
    <experiments>6</experiments>
</comment>
<comment type="interaction">
    <interactant intactId="EBI-720706">
        <id>P21860</id>
    </interactant>
    <interactant intactId="EBI-79084">
        <id>Q92529</id>
        <label>SHC3</label>
    </interactant>
    <organismsDiffer>false</organismsDiffer>
    <experiments>2</experiments>
</comment>
<comment type="interaction">
    <interactant intactId="EBI-720706">
        <id>P21860</id>
    </interactant>
    <interactant intactId="EBI-621482">
        <id>P12931</id>
        <label>SRC</label>
    </interactant>
    <organismsDiffer>false</organismsDiffer>
    <experiments>2</experiments>
</comment>
<comment type="interaction">
    <interactant intactId="EBI-720706">
        <id>P21860</id>
    </interactant>
    <interactant intactId="EBI-78302">
        <id>P43405</id>
        <label>SYK</label>
    </interactant>
    <organismsDiffer>false</organismsDiffer>
    <experiments>6</experiments>
</comment>
<comment type="interaction">
    <interactant intactId="EBI-720706">
        <id>P21860</id>
    </interactant>
    <interactant intactId="EBI-949753">
        <id>Q63HR2</id>
        <label>TNS2</label>
    </interactant>
    <organismsDiffer>false</organismsDiffer>
    <experiments>3</experiments>
</comment>
<comment type="interaction">
    <interactant intactId="EBI-720706">
        <id>P21860</id>
    </interactant>
    <interactant intactId="EBI-1220488">
        <id>Q68CZ2</id>
        <label>TNS3</label>
    </interactant>
    <organismsDiffer>false</organismsDiffer>
    <experiments>2</experiments>
</comment>
<comment type="subcellular location">
    <molecule>Isoform 1</molecule>
    <subcellularLocation>
        <location evidence="16">Cell membrane</location>
        <topology>Single-pass type I membrane protein</topology>
    </subcellularLocation>
</comment>
<comment type="subcellular location">
    <molecule>Isoform 2</molecule>
    <subcellularLocation>
        <location>Secreted</location>
    </subcellularLocation>
</comment>
<comment type="alternative products">
    <event type="alternative splicing"/>
    <isoform>
        <id>P21860-1</id>
        <name>1</name>
        <name>long form</name>
        <sequence type="displayed"/>
    </isoform>
    <isoform>
        <id>P21860-2</id>
        <name>2</name>
        <name>short form</name>
        <sequence type="described" ref="VSP_002893 VSP_002894"/>
    </isoform>
    <isoform>
        <id>P21860-3</id>
        <name>3</name>
        <sequence type="described" ref="VSP_041663 VSP_041664"/>
    </isoform>
    <isoform>
        <id>P21860-4</id>
        <name>4</name>
        <sequence type="described" ref="VSP_041662"/>
    </isoform>
    <isoform>
        <id>P21860-5</id>
        <name>5</name>
        <sequence type="described" ref="VSP_041661"/>
    </isoform>
</comment>
<comment type="tissue specificity">
    <text>Epithelial tissues and brain.</text>
</comment>
<comment type="developmental stage">
    <text>Overexpressed in a subset of human mammary tumors.</text>
</comment>
<comment type="domain">
    <text>The cytoplasmic part of the receptor may interact with the SH2 or SH3 domains of many signal-transducing proteins.</text>
</comment>
<comment type="PTM">
    <text evidence="13 14 16">Autophosphorylated (PubMed:20351256). Ligand-binding increases phosphorylation on tyrosine residues and promotes its association with the p85 subunit of phosphatidylinositol 3-kinase (PubMed:20682778).</text>
</comment>
<comment type="disease" evidence="12">
    <disease id="DI-00645">
        <name>Lethal congenital contracture syndrome 2</name>
        <acronym>LCCS2</acronym>
        <description>A form of lethal congenital contracture syndrome, an autosomal recessive disorder characterized by degeneration of anterior horn neurons, extreme skeletal muscle atrophy, and congenital non-progressive joint contractures (arthrogryposis). The contractures can involve the upper or lower limbs and/or the vertebral column, leading to various degrees of flexion or extension limitations evident at birth. LCCS2 patients manifest craniofacial/ocular findings, lack of hydrops, multiple pterygia, and fractures, as well as a normal duration of pregnancy and a unique feature of a markedly distended urinary bladder (neurogenic bladder defect). The phenotype suggests a spinal cord neuropathic etiology.</description>
        <dbReference type="MIM" id="607598"/>
    </disease>
    <text>The disease is caused by variants affecting the gene represented in this entry.</text>
</comment>
<comment type="disease" evidence="15">
    <disease id="DI-05396">
        <name>Erythroleukemia, familial</name>
        <acronym>FERLK</acronym>
        <description>An autosomal dominant myeloproliferative disorder characterized by neoplastic proliferation of erythroblastic and myeloblastic elements with atypical erythroblasts and myeloblasts in the peripheral blood. Disease penetrance is incomplete.</description>
        <dbReference type="MIM" id="133180"/>
    </disease>
    <text>Disease susceptibility may be associated with variants affecting the gene represented in this entry.</text>
</comment>
<comment type="disease" evidence="16">
    <disease id="DI-06181">
        <name>Visceral neuropathy, familial, 1, autosomal recessive</name>
        <acronym>VSCN1</acronym>
        <description>An autosomal recessive disorder characterized by intestinal dysmotility due to aganglionosis (Hirschsprung disease), hypoganglionosis, and/or chronic intestinal pseudoobstruction. Additional variable features are progressive peripheral neuropathy, arthrogryposis, hypoplasia or aplasia of the olfactory bulb and of the external auditory canals, microtia or anotia, and facial dysmorphism. Some patients present structural cardiac anomalies and arthrogryposis with multiple pterygia.</description>
        <dbReference type="MIM" id="243180"/>
    </disease>
    <text>The disease is caused by variants affecting the gene represented in this entry.</text>
</comment>
<comment type="similarity">
    <text evidence="4">Belongs to the protein kinase superfamily. Tyr protein kinase family. EGF receptor subfamily.</text>
</comment>
<comment type="online information" name="Atlas of Genetics and Cytogenetics in Oncology and Haematology">
    <link uri="https://atlasgeneticsoncology.org/gene/40479/ERBB3"/>
</comment>
<accession>P21860</accession>
<accession>A8K6L6</accession>
<accession>B4DIK7</accession>
<accession>B4DV32</accession>
<accession>E9PDT8</accession>
<accession>Q9BUD7</accession>
<feature type="signal peptide" evidence="3">
    <location>
        <begin position="1"/>
        <end position="19"/>
    </location>
</feature>
<feature type="chain" id="PRO_0000016672" description="Receptor tyrosine-protein kinase erbB-3">
    <location>
        <begin position="20"/>
        <end position="1342"/>
    </location>
</feature>
<feature type="topological domain" description="Extracellular" evidence="3">
    <location>
        <begin position="20"/>
        <end position="643"/>
    </location>
</feature>
<feature type="transmembrane region" description="Helical" evidence="3">
    <location>
        <begin position="644"/>
        <end position="664"/>
    </location>
</feature>
<feature type="topological domain" description="Cytoplasmic" evidence="3">
    <location>
        <begin position="665"/>
        <end position="1342"/>
    </location>
</feature>
<feature type="domain" description="Protein kinase" evidence="4">
    <location>
        <begin position="709"/>
        <end position="966"/>
    </location>
</feature>
<feature type="region of interest" description="Disordered" evidence="5">
    <location>
        <begin position="980"/>
        <end position="999"/>
    </location>
</feature>
<feature type="region of interest" description="Disordered" evidence="5">
    <location>
        <begin position="1033"/>
        <end position="1152"/>
    </location>
</feature>
<feature type="compositionally biased region" description="Polar residues" evidence="5">
    <location>
        <begin position="1042"/>
        <end position="1075"/>
    </location>
</feature>
<feature type="active site" description="Proton acceptor" evidence="4">
    <location>
        <position position="834"/>
    </location>
</feature>
<feature type="binding site">
    <location>
        <begin position="715"/>
        <end position="723"/>
    </location>
    <ligand>
        <name>ATP</name>
        <dbReference type="ChEBI" id="CHEBI:30616"/>
    </ligand>
</feature>
<feature type="binding site">
    <location>
        <position position="742"/>
    </location>
    <ligand>
        <name>ATP</name>
        <dbReference type="ChEBI" id="CHEBI:30616"/>
    </ligand>
</feature>
<feature type="binding site">
    <location>
        <begin position="788"/>
        <end position="790"/>
    </location>
    <ligand>
        <name>ATP</name>
        <dbReference type="ChEBI" id="CHEBI:30616"/>
    </ligand>
</feature>
<feature type="binding site">
    <location>
        <begin position="834"/>
        <end position="839"/>
    </location>
    <ligand>
        <name>ATP</name>
        <dbReference type="ChEBI" id="CHEBI:30616"/>
    </ligand>
</feature>
<feature type="modified residue" description="Phosphoserine" evidence="23 24">
    <location>
        <position position="686"/>
    </location>
</feature>
<feature type="modified residue" description="Phosphoserine" evidence="24">
    <location>
        <position position="982"/>
    </location>
</feature>
<feature type="glycosylation site" description="N-linked (GlcNAc...) asparagine" evidence="3">
    <location>
        <position position="126"/>
    </location>
</feature>
<feature type="glycosylation site" description="N-linked (GlcNAc...) asparagine" evidence="7">
    <location>
        <position position="250"/>
    </location>
</feature>
<feature type="glycosylation site" description="N-linked (GlcNAc...) asparagine" evidence="7">
    <location>
        <position position="353"/>
    </location>
</feature>
<feature type="glycosylation site" description="N-linked (GlcNAc...) asparagine" evidence="7">
    <location>
        <position position="408"/>
    </location>
</feature>
<feature type="glycosylation site" description="N-linked (GlcNAc...) asparagine" evidence="7">
    <location>
        <position position="414"/>
    </location>
</feature>
<feature type="glycosylation site" description="N-linked (GlcNAc...) asparagine" evidence="7">
    <location>
        <position position="437"/>
    </location>
</feature>
<feature type="glycosylation site" description="N-linked (GlcNAc...) asparagine" evidence="7">
    <location>
        <position position="469"/>
    </location>
</feature>
<feature type="glycosylation site" description="N-linked (GlcNAc...) asparagine" evidence="7">
    <location>
        <position position="522"/>
    </location>
</feature>
<feature type="glycosylation site" description="N-linked (GlcNAc...) asparagine" evidence="7">
    <location>
        <position position="566"/>
    </location>
</feature>
<feature type="glycosylation site" description="N-linked (GlcNAc...) asparagine" evidence="3">
    <location>
        <position position="616"/>
    </location>
</feature>
<feature type="disulfide bond" evidence="7">
    <location>
        <begin position="29"/>
        <end position="56"/>
    </location>
</feature>
<feature type="disulfide bond" evidence="7">
    <location>
        <begin position="156"/>
        <end position="183"/>
    </location>
</feature>
<feature type="disulfide bond" evidence="7">
    <location>
        <begin position="186"/>
        <end position="194"/>
    </location>
</feature>
<feature type="disulfide bond" evidence="7">
    <location>
        <begin position="190"/>
        <end position="202"/>
    </location>
</feature>
<feature type="disulfide bond" evidence="7">
    <location>
        <begin position="210"/>
        <end position="218"/>
    </location>
</feature>
<feature type="disulfide bond" evidence="7">
    <location>
        <begin position="214"/>
        <end position="226"/>
    </location>
</feature>
<feature type="disulfide bond" evidence="7">
    <location>
        <begin position="227"/>
        <end position="235"/>
    </location>
</feature>
<feature type="disulfide bond" evidence="7">
    <location>
        <begin position="231"/>
        <end position="243"/>
    </location>
</feature>
<feature type="disulfide bond" evidence="7">
    <location>
        <begin position="246"/>
        <end position="255"/>
    </location>
</feature>
<feature type="disulfide bond" evidence="7">
    <location>
        <begin position="259"/>
        <end position="286"/>
    </location>
</feature>
<feature type="disulfide bond" evidence="7">
    <location>
        <begin position="290"/>
        <end position="301"/>
    </location>
</feature>
<feature type="disulfide bond" evidence="7">
    <location>
        <begin position="305"/>
        <end position="320"/>
    </location>
</feature>
<feature type="disulfide bond" evidence="7">
    <location>
        <begin position="323"/>
        <end position="327"/>
    </location>
</feature>
<feature type="disulfide bond" evidence="7">
    <location>
        <begin position="500"/>
        <end position="509"/>
    </location>
</feature>
<feature type="disulfide bond" evidence="7">
    <location>
        <begin position="504"/>
        <end position="517"/>
    </location>
</feature>
<feature type="disulfide bond" evidence="7">
    <location>
        <begin position="520"/>
        <end position="529"/>
    </location>
</feature>
<feature type="disulfide bond" evidence="7">
    <location>
        <begin position="533"/>
        <end position="549"/>
    </location>
</feature>
<feature type="disulfide bond" evidence="7">
    <location>
        <begin position="552"/>
        <end position="565"/>
    </location>
</feature>
<feature type="disulfide bond" evidence="7">
    <location>
        <begin position="556"/>
        <end position="573"/>
    </location>
</feature>
<feature type="disulfide bond" evidence="7">
    <location>
        <begin position="576"/>
        <end position="585"/>
    </location>
</feature>
<feature type="disulfide bond" evidence="1">
    <location>
        <begin position="589"/>
        <end position="610"/>
    </location>
</feature>
<feature type="disulfide bond" evidence="1">
    <location>
        <begin position="613"/>
        <end position="621"/>
    </location>
</feature>
<feature type="disulfide bond" evidence="1">
    <location>
        <begin position="617"/>
        <end position="629"/>
    </location>
</feature>
<feature type="splice variant" id="VSP_041661" description="In isoform 5." evidence="18">
    <location>
        <begin position="1"/>
        <end position="643"/>
    </location>
</feature>
<feature type="splice variant" id="VSP_041662" description="In isoform 4." evidence="18">
    <location>
        <begin position="1"/>
        <end position="59"/>
    </location>
</feature>
<feature type="splice variant" id="VSP_002893" description="In isoform 2." evidence="20">
    <original>EILSGGVYIEKNDKLCHMDTIDWRDIVRDRDAEIVVKDNGRSC</original>
    <variation>GQFPMVPSGLTPQPAQDWYLLDDDPRLLTLSASSKVPVTLAAV</variation>
    <location>
        <begin position="141"/>
        <end position="183"/>
    </location>
</feature>
<feature type="splice variant" id="VSP_002894" description="In isoform 2." evidence="20">
    <location>
        <begin position="184"/>
        <end position="1342"/>
    </location>
</feature>
<feature type="splice variant" id="VSP_041663" description="In isoform 3." evidence="19 21">
    <original>C</original>
    <variation>F</variation>
    <location>
        <position position="331"/>
    </location>
</feature>
<feature type="splice variant" id="VSP_041664" description="In isoform 3." evidence="19 21">
    <location>
        <begin position="332"/>
        <end position="1342"/>
    </location>
</feature>
<feature type="sequence variant" id="VAR_042101" description="In dbSNP:rs34379766." evidence="11">
    <original>S</original>
    <variation>Y</variation>
    <location>
        <position position="20"/>
    </location>
</feature>
<feature type="sequence variant" id="VAR_042102" description="In dbSNP:rs56017157." evidence="11">
    <original>P</original>
    <variation>L</variation>
    <location>
        <position position="30"/>
    </location>
</feature>
<feature type="sequence variant" id="VAR_042103" description="In an ovarian mucinous carcinoma sample; somatic mutation; dbSNP:rs1057519893." evidence="11">
    <original>V</original>
    <variation>M</variation>
    <location>
        <position position="104"/>
    </location>
</feature>
<feature type="sequence variant" id="VAR_042104" description="In dbSNP:rs56107455." evidence="11">
    <original>T</original>
    <variation>I</variation>
    <location>
        <position position="204"/>
    </location>
</feature>
<feature type="sequence variant" id="VAR_049710" description="In dbSNP:rs12320176.">
    <original>N</original>
    <variation>S</variation>
    <location>
        <position position="385"/>
    </location>
</feature>
<feature type="sequence variant" id="VAR_042105" description="In dbSNP:rs56387488." evidence="11">
    <original>R</original>
    <variation>W</variation>
    <location>
        <position position="683"/>
    </location>
</feature>
<feature type="sequence variant" id="VAR_042106" description="In dbSNP:rs35961836." evidence="11">
    <original>S</original>
    <variation>L</variation>
    <location>
        <position position="717"/>
    </location>
</feature>
<feature type="sequence variant" id="VAR_042107" description="In dbSNP:rs55787439." evidence="11">
    <original>I</original>
    <variation>T</variation>
    <location>
        <position position="744"/>
    </location>
</feature>
<feature type="sequence variant" id="VAR_086108" description="In VSCN1; almost complete loss of ERBB2 and ERBB3 phosphorylation in the presence or in the absence of NRG1 stimulation, suggesting alteration of downstream signaling; does not affect the subcellular localization at the cell membrane; dbSNP:rs2136818517." evidence="16">
    <original>T</original>
    <variation>P</variation>
    <location>
        <position position="787"/>
    </location>
</feature>
<feature type="sequence variant" id="VAR_086109" description="In VSCN1; uncertain significance; some decrease in ERBB2 phosphorylation upon NG1 treatment, compared to wild-type; does not affect the subcellular localization at the cell membrane." evidence="16">
    <original>T</original>
    <variation>S</variation>
    <location>
        <position position="873"/>
    </location>
</feature>
<feature type="sequence variant" id="VAR_086110" description="In VSCN1; almost complete loss of ERBB2 and ERBB3 phosphorylation in the presence or in the absence of NRG1 stimulation, suggesting alteration of downstream signaling; does not affect the subcellular localization at the cell membrane; dbSNP:rs2136822199." evidence="16">
    <original>V</original>
    <variation>M</variation>
    <location>
        <position position="899"/>
    </location>
</feature>
<feature type="sequence variant" id="VAR_086111" description="In VSCN1; uncertain significance; some decrease in ERBB2 phosphorylation upon NG1 treatment, compared to wild-type; does not affect the subcellular localization at the cell membrane; dbSNP:rs762765641." evidence="16">
    <original>Q</original>
    <variation>R</variation>
    <location>
        <position position="932"/>
    </location>
</feature>
<feature type="sequence variant" id="VAR_042108" description="In dbSNP:rs56259600." evidence="11">
    <original>K</original>
    <variation>R</variation>
    <location>
        <position position="998"/>
    </location>
</feature>
<feature type="sequence variant" id="VAR_042109" description="In dbSNP:rs773123." evidence="11">
    <original>S</original>
    <variation>C</variation>
    <location>
        <position position="1119"/>
    </location>
</feature>
<feature type="sequence variant" id="VAR_042110" description="In dbSNP:rs2271188." evidence="11">
    <original>R</original>
    <variation>H</variation>
    <location>
        <position position="1127"/>
    </location>
</feature>
<feature type="sequence variant" id="VAR_042111" description="In dbSNP:rs55699040." evidence="11">
    <original>L</original>
    <variation>I</variation>
    <location>
        <position position="1177"/>
    </location>
</feature>
<feature type="sequence variant" id="VAR_042112" description="In dbSNP:rs55709407." evidence="11">
    <original>T</original>
    <variation>K</variation>
    <location>
        <position position="1254"/>
    </location>
</feature>
<feature type="sequence variant" id="VAR_049711" description="In dbSNP:rs11171743.">
    <original>G</original>
    <variation>S</variation>
    <location>
        <position position="1271"/>
    </location>
</feature>
<feature type="sequence variant" id="VAR_081641" description="In FERLK; risk factor for erythroleukemia; results in increased ERBB-mediated signaling; results in a block of erythroid differentiation and increased cell proliferation; dbSNP:rs755855285." evidence="15">
    <original>A</original>
    <variation>T</variation>
    <location>
        <position position="1337"/>
    </location>
</feature>
<feature type="mutagenesis site" description="Strongly reduced autophosphorylation." evidence="13">
    <original>K</original>
    <variation>M</variation>
    <location>
        <position position="742"/>
    </location>
</feature>
<feature type="mutagenesis site" description="Strongly reduced tyrosine phosphorylation." evidence="13">
    <original>Y</original>
    <variation>E</variation>
    <location>
        <position position="868"/>
    </location>
</feature>
<feature type="sequence conflict" description="In Ref. 2; AAA35979." evidence="22" ref="2">
    <original>E</original>
    <variation>G</variation>
    <location>
        <position position="560"/>
    </location>
</feature>
<feature type="sequence conflict" description="In Ref. 5; BAF84370." evidence="22" ref="5">
    <original>G</original>
    <variation>S</variation>
    <location>
        <position position="684"/>
    </location>
</feature>
<feature type="sequence conflict" description="In Ref. 2; AAA35979." evidence="22" ref="2">
    <original>E</original>
    <variation>G</variation>
    <location>
        <position position="1064"/>
    </location>
</feature>
<feature type="sequence conflict" description="In Ref. 5; BAG62544." evidence="22" ref="5">
    <original>C</original>
    <variation>S</variation>
    <location>
        <position position="1078"/>
    </location>
</feature>
<feature type="sequence conflict" description="In Ref. 5; BAF84370." evidence="22" ref="5">
    <original>D</original>
    <variation>G</variation>
    <location>
        <position position="1163"/>
    </location>
</feature>
<feature type="strand" evidence="29">
    <location>
        <begin position="28"/>
        <end position="30"/>
    </location>
</feature>
<feature type="strand" evidence="36">
    <location>
        <begin position="38"/>
        <end position="41"/>
    </location>
</feature>
<feature type="helix" evidence="29">
    <location>
        <begin position="43"/>
        <end position="53"/>
    </location>
</feature>
<feature type="strand" evidence="25">
    <location>
        <begin position="58"/>
        <end position="61"/>
    </location>
</feature>
<feature type="strand" evidence="25">
    <location>
        <begin position="63"/>
        <end position="67"/>
    </location>
</feature>
<feature type="helix" evidence="25">
    <location>
        <begin position="75"/>
        <end position="79"/>
    </location>
</feature>
<feature type="strand" evidence="25">
    <location>
        <begin position="82"/>
        <end position="85"/>
    </location>
</feature>
<feature type="strand" evidence="25">
    <location>
        <begin position="87"/>
        <end position="91"/>
    </location>
</feature>
<feature type="strand" evidence="25">
    <location>
        <begin position="95"/>
        <end position="98"/>
    </location>
</feature>
<feature type="turn" evidence="25">
    <location>
        <begin position="112"/>
        <end position="114"/>
    </location>
</feature>
<feature type="strand" evidence="25">
    <location>
        <begin position="115"/>
        <end position="120"/>
    </location>
</feature>
<feature type="strand" evidence="29">
    <location>
        <begin position="125"/>
        <end position="128"/>
    </location>
</feature>
<feature type="strand" evidence="25">
    <location>
        <begin position="133"/>
        <end position="135"/>
    </location>
</feature>
<feature type="strand" evidence="37">
    <location>
        <begin position="141"/>
        <end position="144"/>
    </location>
</feature>
<feature type="strand" evidence="25">
    <location>
        <begin position="146"/>
        <end position="150"/>
    </location>
</feature>
<feature type="turn" evidence="25">
    <location>
        <begin position="158"/>
        <end position="160"/>
    </location>
</feature>
<feature type="helix" evidence="25">
    <location>
        <begin position="163"/>
        <end position="166"/>
    </location>
</feature>
<feature type="strand" evidence="25">
    <location>
        <begin position="174"/>
        <end position="178"/>
    </location>
</feature>
<feature type="helix" evidence="29">
    <location>
        <begin position="188"/>
        <end position="190"/>
    </location>
</feature>
<feature type="strand" evidence="25">
    <location>
        <begin position="194"/>
        <end position="198"/>
    </location>
</feature>
<feature type="helix" evidence="36">
    <location>
        <begin position="199"/>
        <end position="201"/>
    </location>
</feature>
<feature type="strand" evidence="25">
    <location>
        <begin position="214"/>
        <end position="216"/>
    </location>
</feature>
<feature type="strand" evidence="25">
    <location>
        <begin position="218"/>
        <end position="222"/>
    </location>
</feature>
<feature type="helix" evidence="31">
    <location>
        <begin position="223"/>
        <end position="225"/>
    </location>
</feature>
<feature type="strand" evidence="25">
    <location>
        <begin position="231"/>
        <end position="233"/>
    </location>
</feature>
<feature type="strand" evidence="25">
    <location>
        <begin position="235"/>
        <end position="239"/>
    </location>
</feature>
<feature type="helix" evidence="25">
    <location>
        <begin position="240"/>
        <end position="242"/>
    </location>
</feature>
<feature type="strand" evidence="25">
    <location>
        <begin position="243"/>
        <end position="251"/>
    </location>
</feature>
<feature type="strand" evidence="25">
    <location>
        <begin position="254"/>
        <end position="258"/>
    </location>
</feature>
<feature type="strand" evidence="25">
    <location>
        <begin position="262"/>
        <end position="265"/>
    </location>
</feature>
<feature type="turn" evidence="25">
    <location>
        <begin position="267"/>
        <end position="269"/>
    </location>
</feature>
<feature type="strand" evidence="25">
    <location>
        <begin position="270"/>
        <end position="274"/>
    </location>
</feature>
<feature type="strand" evidence="25">
    <location>
        <begin position="280"/>
        <end position="282"/>
    </location>
</feature>
<feature type="strand" evidence="25">
    <location>
        <begin position="285"/>
        <end position="289"/>
    </location>
</feature>
<feature type="strand" evidence="25">
    <location>
        <begin position="295"/>
        <end position="297"/>
    </location>
</feature>
<feature type="strand" evidence="25">
    <location>
        <begin position="300"/>
        <end position="304"/>
    </location>
</feature>
<feature type="strand" evidence="25">
    <location>
        <begin position="309"/>
        <end position="314"/>
    </location>
</feature>
<feature type="strand" evidence="25">
    <location>
        <begin position="317"/>
        <end position="322"/>
    </location>
</feature>
<feature type="strand" evidence="29">
    <location>
        <begin position="324"/>
        <end position="326"/>
    </location>
</feature>
<feature type="strand" evidence="35">
    <location>
        <begin position="330"/>
        <end position="332"/>
    </location>
</feature>
<feature type="strand" evidence="31">
    <location>
        <begin position="338"/>
        <end position="342"/>
    </location>
</feature>
<feature type="turn" evidence="35">
    <location>
        <begin position="345"/>
        <end position="347"/>
    </location>
</feature>
<feature type="helix" evidence="35">
    <location>
        <begin position="348"/>
        <end position="351"/>
    </location>
</feature>
<feature type="strand" evidence="35">
    <location>
        <begin position="355"/>
        <end position="363"/>
    </location>
</feature>
<feature type="helix" evidence="35">
    <location>
        <begin position="365"/>
        <end position="369"/>
    </location>
</feature>
<feature type="turn" evidence="35">
    <location>
        <begin position="372"/>
        <end position="375"/>
    </location>
</feature>
<feature type="helix" evidence="35">
    <location>
        <begin position="381"/>
        <end position="389"/>
    </location>
</feature>
<feature type="strand" evidence="35">
    <location>
        <begin position="392"/>
        <end position="395"/>
    </location>
</feature>
<feature type="strand" evidence="35">
    <location>
        <begin position="397"/>
        <end position="399"/>
    </location>
</feature>
<feature type="helix" evidence="35">
    <location>
        <begin position="410"/>
        <end position="412"/>
    </location>
</feature>
<feature type="turn" evidence="35">
    <location>
        <begin position="425"/>
        <end position="427"/>
    </location>
</feature>
<feature type="strand" evidence="35">
    <location>
        <begin position="428"/>
        <end position="433"/>
    </location>
</feature>
<feature type="strand" evidence="35">
    <location>
        <begin position="451"/>
        <end position="457"/>
    </location>
</feature>
<feature type="helix" evidence="29">
    <location>
        <begin position="465"/>
        <end position="467"/>
    </location>
</feature>
<feature type="helix" evidence="35">
    <location>
        <begin position="470"/>
        <end position="474"/>
    </location>
</feature>
<feature type="strand" evidence="35">
    <location>
        <begin position="481"/>
        <end position="488"/>
    </location>
</feature>
<feature type="helix" evidence="35">
    <location>
        <begin position="490"/>
        <end position="495"/>
    </location>
</feature>
<feature type="strand" evidence="34">
    <location>
        <begin position="509"/>
        <end position="513"/>
    </location>
</feature>
<feature type="helix" evidence="34">
    <location>
        <begin position="514"/>
        <end position="516"/>
    </location>
</feature>
<feature type="strand" evidence="34">
    <location>
        <begin position="517"/>
        <end position="522"/>
    </location>
</feature>
<feature type="strand" evidence="33">
    <location>
        <begin position="528"/>
        <end position="531"/>
    </location>
</feature>
<feature type="strand" evidence="34">
    <location>
        <begin position="534"/>
        <end position="540"/>
    </location>
</feature>
<feature type="strand" evidence="34">
    <location>
        <begin position="542"/>
        <end position="545"/>
    </location>
</feature>
<feature type="strand" evidence="34">
    <location>
        <begin position="548"/>
        <end position="551"/>
    </location>
</feature>
<feature type="strand" evidence="34">
    <location>
        <begin position="560"/>
        <end position="562"/>
    </location>
</feature>
<feature type="strand" evidence="34">
    <location>
        <begin position="564"/>
        <end position="569"/>
    </location>
</feature>
<feature type="strand" evidence="34">
    <location>
        <begin position="572"/>
        <end position="581"/>
    </location>
</feature>
<feature type="strand" evidence="34">
    <location>
        <begin position="584"/>
        <end position="588"/>
    </location>
</feature>
<feature type="strand" evidence="34">
    <location>
        <begin position="591"/>
        <end position="595"/>
    </location>
</feature>
<feature type="strand" evidence="34">
    <location>
        <begin position="598"/>
        <end position="604"/>
    </location>
</feature>
<feature type="strand" evidence="34">
    <location>
        <begin position="608"/>
        <end position="612"/>
    </location>
</feature>
<feature type="strand" evidence="34">
    <location>
        <begin position="621"/>
        <end position="625"/>
    </location>
</feature>
<feature type="helix" evidence="34">
    <location>
        <begin position="626"/>
        <end position="628"/>
    </location>
</feature>
<feature type="helix" evidence="26">
    <location>
        <begin position="641"/>
        <end position="670"/>
    </location>
</feature>
<feature type="helix" evidence="32">
    <location>
        <begin position="706"/>
        <end position="708"/>
    </location>
</feature>
<feature type="strand" evidence="32">
    <location>
        <begin position="709"/>
        <end position="717"/>
    </location>
</feature>
<feature type="strand" evidence="32">
    <location>
        <begin position="722"/>
        <end position="728"/>
    </location>
</feature>
<feature type="strand" evidence="28">
    <location>
        <begin position="731"/>
        <end position="733"/>
    </location>
</feature>
<feature type="strand" evidence="32">
    <location>
        <begin position="737"/>
        <end position="744"/>
    </location>
</feature>
<feature type="turn" evidence="32">
    <location>
        <begin position="747"/>
        <end position="749"/>
    </location>
</feature>
<feature type="strand" evidence="30">
    <location>
        <begin position="753"/>
        <end position="755"/>
    </location>
</feature>
<feature type="helix" evidence="32">
    <location>
        <begin position="758"/>
        <end position="764"/>
    </location>
</feature>
<feature type="strand" evidence="32">
    <location>
        <begin position="774"/>
        <end position="778"/>
    </location>
</feature>
<feature type="strand" evidence="32">
    <location>
        <begin position="780"/>
        <end position="788"/>
    </location>
</feature>
<feature type="helix" evidence="32">
    <location>
        <begin position="795"/>
        <end position="802"/>
    </location>
</feature>
<feature type="helix" evidence="32">
    <location>
        <begin position="803"/>
        <end position="806"/>
    </location>
</feature>
<feature type="helix" evidence="32">
    <location>
        <begin position="808"/>
        <end position="827"/>
    </location>
</feature>
<feature type="helix" evidence="32">
    <location>
        <begin position="837"/>
        <end position="839"/>
    </location>
</feature>
<feature type="strand" evidence="32">
    <location>
        <begin position="840"/>
        <end position="846"/>
    </location>
</feature>
<feature type="strand" evidence="32">
    <location>
        <begin position="848"/>
        <end position="850"/>
    </location>
</feature>
<feature type="helix" evidence="32">
    <location>
        <begin position="856"/>
        <end position="858"/>
    </location>
</feature>
<feature type="helix" evidence="30">
    <location>
        <begin position="865"/>
        <end position="868"/>
    </location>
</feature>
<feature type="turn" evidence="30">
    <location>
        <begin position="870"/>
        <end position="872"/>
    </location>
</feature>
<feature type="helix" evidence="32">
    <location>
        <begin position="875"/>
        <end position="877"/>
    </location>
</feature>
<feature type="helix" evidence="32">
    <location>
        <begin position="880"/>
        <end position="885"/>
    </location>
</feature>
<feature type="helix" evidence="32">
    <location>
        <begin position="890"/>
        <end position="905"/>
    </location>
</feature>
<feature type="turn" evidence="32">
    <location>
        <begin position="911"/>
        <end position="914"/>
    </location>
</feature>
<feature type="helix" evidence="32">
    <location>
        <begin position="917"/>
        <end position="919"/>
    </location>
</feature>
<feature type="helix" evidence="32">
    <location>
        <begin position="920"/>
        <end position="925"/>
    </location>
</feature>
<feature type="helix" evidence="32">
    <location>
        <begin position="938"/>
        <end position="947"/>
    </location>
</feature>
<feature type="turn" evidence="32">
    <location>
        <begin position="952"/>
        <end position="954"/>
    </location>
</feature>
<feature type="helix" evidence="32">
    <location>
        <begin position="958"/>
        <end position="969"/>
    </location>
</feature>
<feature type="helix" evidence="32">
    <location>
        <begin position="972"/>
        <end position="974"/>
    </location>
</feature>
<feature type="strand" evidence="27">
    <location>
        <begin position="980"/>
        <end position="983"/>
    </location>
</feature>
<keyword id="KW-0002">3D-structure</keyword>
<keyword id="KW-0025">Alternative splicing</keyword>
<keyword id="KW-0067">ATP-binding</keyword>
<keyword id="KW-1003">Cell membrane</keyword>
<keyword id="KW-0225">Disease variant</keyword>
<keyword id="KW-1015">Disulfide bond</keyword>
<keyword id="KW-0325">Glycoprotein</keyword>
<keyword id="KW-0418">Kinase</keyword>
<keyword id="KW-0472">Membrane</keyword>
<keyword id="KW-0547">Nucleotide-binding</keyword>
<keyword id="KW-0597">Phosphoprotein</keyword>
<keyword id="KW-1267">Proteomics identification</keyword>
<keyword id="KW-0675">Receptor</keyword>
<keyword id="KW-1185">Reference proteome</keyword>
<keyword id="KW-0964">Secreted</keyword>
<keyword id="KW-0732">Signal</keyword>
<keyword id="KW-0808">Transferase</keyword>
<keyword id="KW-0812">Transmembrane</keyword>
<keyword id="KW-1133">Transmembrane helix</keyword>
<keyword id="KW-0829">Tyrosine-protein kinase</keyword>
<proteinExistence type="evidence at protein level"/>
<sequence length="1342" mass="148098">MRANDALQVLGLLFSLARGSEVGNSQAVCPGTLNGLSVTGDAENQYQTLYKLYERCEVVMGNLEIVLTGHNADLSFLQWIREVTGYVLVAMNEFSTLPLPNLRVVRGTQVYDGKFAIFVMLNYNTNSSHALRQLRLTQLTEILSGGVYIEKNDKLCHMDTIDWRDIVRDRDAEIVVKDNGRSCPPCHEVCKGRCWGPGSEDCQTLTKTICAPQCNGHCFGPNPNQCCHDECAGGCSGPQDTDCFACRHFNDSGACVPRCPQPLVYNKLTFQLEPNPHTKYQYGGVCVASCPHNFVVDQTSCVRACPPDKMEVDKNGLKMCEPCGGLCPKACEGTGSGSRFQTVDSSNIDGFVNCTKILGNLDFLITGLNGDPWHKIPALDPEKLNVFRTVREITGYLNIQSWPPHMHNFSVFSNLTTIGGRSLYNRGFSLLIMKNLNVTSLGFRSLKEISAGRIYISANRQLCYHHSLNWTKVLRGPTEERLDIKHNRPRRDCVAEGKVCDPLCSSGGCWGPGPGQCLSCRNYSRGGVCVTHCNFLNGEPREFAHEAECFSCHPECQPMEGTATCNGSGSDTCAQCAHFRDGPHCVSSCPHGVLGAKGPIYKYPDVQNECRPCHENCTQGCKGPELQDCLGQTLVLIGKTHLTMALTVIAGLVVIFMMLGGTFLYWRGRRIQNKRAMRRYLERGESIEPLDPSEKANKVLARIFKETELRKLKVLGSGVFGTVHKGVWIPEGESIKIPVCIKVIEDKSGRQSFQAVTDHMLAIGSLDHAHIVRLLGLCPGSSLQLVTQYLPLGSLLDHVRQHRGALGPQLLLNWGVQIAKGMYYLEEHGMVHRNLAARNVLLKSPSQVQVADFGVADLLPPDDKQLLYSEAKTPIKWMALESIHFGKYTHQSDVWSYGVTVWELMTFGAEPYAGLRLAEVPDLLEKGERLAQPQICTIDVYMVMVKCWMIDENIRPTFKELANEFTRMARDPPRYLVIKRESGPGIAPGPEPHGLTNKKLEEVELEPELDLDLDLEAEEDNLATTTLGSALSLPVGTLNRPRGSQSLLSPSSGYMPMNQGNLGESCQESAVSGSSERCPRPVSLHPMPRGCLASESSEGHVTGSEAELQEKVSMCRSRSRSRSPRPRGDSAYHSQRHSLLTPVTPLSPPGLEEEDVNGYVMPDTHLKGTPSSREGTLSSVGLSSVLGTEEEDEDEEYEYMNRRRRHSPPHPPRPSSLEELGYEYMDVGSDLSASLGSTQSCPLHPVPIMPTAGTTPDEDYEYMNRQRDGGGPGGDYAAMGACPASEQGYEEMRAFQGPGHQAPHVHYARLKTLRSLEATDSAFDNPDYWHSRLFPKANAQRT</sequence>